<dbReference type="EMBL" id="D14821">
    <property type="protein sequence ID" value="BAA03558.1"/>
    <property type="molecule type" value="mRNA"/>
</dbReference>
<dbReference type="EMBL" id="D13979">
    <property type="protein sequence ID" value="BAA03089.1"/>
    <property type="status" value="ALT_SEQ"/>
    <property type="molecule type" value="mRNA"/>
</dbReference>
<dbReference type="EMBL" id="D14289">
    <property type="protein sequence ID" value="BAA03247.1"/>
    <property type="status" value="ALT_INIT"/>
    <property type="molecule type" value="mRNA"/>
</dbReference>
<dbReference type="EMBL" id="AF018282">
    <property type="protein sequence ID" value="AAC28932.1"/>
    <property type="molecule type" value="Genomic_DNA"/>
</dbReference>
<dbReference type="EMBL" id="AF018271">
    <property type="protein sequence ID" value="AAC28932.1"/>
    <property type="status" value="JOINED"/>
    <property type="molecule type" value="Genomic_DNA"/>
</dbReference>
<dbReference type="EMBL" id="AF018272">
    <property type="protein sequence ID" value="AAC28932.1"/>
    <property type="status" value="JOINED"/>
    <property type="molecule type" value="Genomic_DNA"/>
</dbReference>
<dbReference type="EMBL" id="AF018273">
    <property type="protein sequence ID" value="AAC28932.1"/>
    <property type="status" value="JOINED"/>
    <property type="molecule type" value="Genomic_DNA"/>
</dbReference>
<dbReference type="EMBL" id="AF018274">
    <property type="protein sequence ID" value="AAC28932.1"/>
    <property type="status" value="JOINED"/>
    <property type="molecule type" value="Genomic_DNA"/>
</dbReference>
<dbReference type="EMBL" id="AF018275">
    <property type="protein sequence ID" value="AAC28932.1"/>
    <property type="status" value="JOINED"/>
    <property type="molecule type" value="Genomic_DNA"/>
</dbReference>
<dbReference type="EMBL" id="AF018276">
    <property type="protein sequence ID" value="AAC28932.1"/>
    <property type="status" value="JOINED"/>
    <property type="molecule type" value="Genomic_DNA"/>
</dbReference>
<dbReference type="EMBL" id="AF018277">
    <property type="protein sequence ID" value="AAC28932.1"/>
    <property type="status" value="JOINED"/>
    <property type="molecule type" value="Genomic_DNA"/>
</dbReference>
<dbReference type="EMBL" id="AF018278">
    <property type="protein sequence ID" value="AAC28932.1"/>
    <property type="status" value="JOINED"/>
    <property type="molecule type" value="Genomic_DNA"/>
</dbReference>
<dbReference type="EMBL" id="AF018279">
    <property type="protein sequence ID" value="AAC28932.1"/>
    <property type="status" value="JOINED"/>
    <property type="molecule type" value="Genomic_DNA"/>
</dbReference>
<dbReference type="EMBL" id="AF018281">
    <property type="protein sequence ID" value="AAC28932.1"/>
    <property type="status" value="JOINED"/>
    <property type="molecule type" value="Genomic_DNA"/>
</dbReference>
<dbReference type="EMBL" id="AF018282">
    <property type="protein sequence ID" value="AAC28931.1"/>
    <property type="molecule type" value="Genomic_DNA"/>
</dbReference>
<dbReference type="EMBL" id="AF018270">
    <property type="protein sequence ID" value="AAC28931.1"/>
    <property type="status" value="JOINED"/>
    <property type="molecule type" value="Genomic_DNA"/>
</dbReference>
<dbReference type="EMBL" id="AF018272">
    <property type="protein sequence ID" value="AAC28931.1"/>
    <property type="status" value="JOINED"/>
    <property type="molecule type" value="Genomic_DNA"/>
</dbReference>
<dbReference type="EMBL" id="AF018273">
    <property type="protein sequence ID" value="AAC28931.1"/>
    <property type="status" value="JOINED"/>
    <property type="molecule type" value="Genomic_DNA"/>
</dbReference>
<dbReference type="EMBL" id="AF018274">
    <property type="protein sequence ID" value="AAC28931.1"/>
    <property type="status" value="JOINED"/>
    <property type="molecule type" value="Genomic_DNA"/>
</dbReference>
<dbReference type="EMBL" id="AF018275">
    <property type="protein sequence ID" value="AAC28931.1"/>
    <property type="status" value="JOINED"/>
    <property type="molecule type" value="Genomic_DNA"/>
</dbReference>
<dbReference type="EMBL" id="AF018276">
    <property type="protein sequence ID" value="AAC28931.1"/>
    <property type="status" value="JOINED"/>
    <property type="molecule type" value="Genomic_DNA"/>
</dbReference>
<dbReference type="EMBL" id="AF018277">
    <property type="protein sequence ID" value="AAC28931.1"/>
    <property type="status" value="JOINED"/>
    <property type="molecule type" value="Genomic_DNA"/>
</dbReference>
<dbReference type="EMBL" id="AF018278">
    <property type="protein sequence ID" value="AAC28931.1"/>
    <property type="status" value="JOINED"/>
    <property type="molecule type" value="Genomic_DNA"/>
</dbReference>
<dbReference type="EMBL" id="AF018279">
    <property type="protein sequence ID" value="AAC28931.1"/>
    <property type="status" value="JOINED"/>
    <property type="molecule type" value="Genomic_DNA"/>
</dbReference>
<dbReference type="EMBL" id="AF018281">
    <property type="protein sequence ID" value="AAC28931.1"/>
    <property type="status" value="JOINED"/>
    <property type="molecule type" value="Genomic_DNA"/>
</dbReference>
<dbReference type="EMBL" id="AF018283">
    <property type="protein sequence ID" value="AAC26143.1"/>
    <property type="molecule type" value="mRNA"/>
</dbReference>
<dbReference type="EMBL" id="AK297616">
    <property type="protein sequence ID" value="BAH12630.1"/>
    <property type="molecule type" value="mRNA"/>
</dbReference>
<dbReference type="EMBL" id="BT009871">
    <property type="protein sequence ID" value="AAP88873.1"/>
    <property type="molecule type" value="mRNA"/>
</dbReference>
<dbReference type="EMBL" id="CR456792">
    <property type="protein sequence ID" value="CAG33073.1"/>
    <property type="molecule type" value="mRNA"/>
</dbReference>
<dbReference type="EMBL" id="AC103680">
    <property type="status" value="NOT_ANNOTATED_CDS"/>
    <property type="molecule type" value="Genomic_DNA"/>
</dbReference>
<dbReference type="EMBL" id="AC104339">
    <property type="status" value="NOT_ANNOTATED_CDS"/>
    <property type="molecule type" value="Genomic_DNA"/>
</dbReference>
<dbReference type="EMBL" id="CH471060">
    <property type="protein sequence ID" value="EAW91685.1"/>
    <property type="molecule type" value="Genomic_DNA"/>
</dbReference>
<dbReference type="EMBL" id="BC005850">
    <property type="protein sequence ID" value="AAH05850.1"/>
    <property type="status" value="ALT_INIT"/>
    <property type="molecule type" value="mRNA"/>
</dbReference>
<dbReference type="EMBL" id="BC067078">
    <property type="protein sequence ID" value="AAH67078.2"/>
    <property type="molecule type" value="mRNA"/>
</dbReference>
<dbReference type="EMBL" id="AF181450">
    <property type="status" value="NOT_ANNOTATED_CDS"/>
    <property type="molecule type" value="Genomic_DNA"/>
</dbReference>
<dbReference type="EMBL" id="D43638">
    <property type="protein sequence ID" value="BAA07755.1"/>
    <property type="molecule type" value="mRNA"/>
</dbReference>
<dbReference type="EMBL" id="X79990">
    <property type="protein sequence ID" value="CAA56311.1"/>
    <property type="molecule type" value="mRNA"/>
</dbReference>
<dbReference type="EMBL" id="S74096">
    <property type="protein sequence ID" value="AAB32126.1"/>
    <property type="molecule type" value="Genomic_DNA"/>
</dbReference>
<dbReference type="EMBL" id="S74092">
    <property type="status" value="NOT_ANNOTATED_CDS"/>
    <property type="molecule type" value="Genomic_DNA"/>
</dbReference>
<dbReference type="EMBL" id="S78158">
    <property type="protein sequence ID" value="AAB34819.2"/>
    <property type="status" value="ALT_SEQ"/>
    <property type="molecule type" value="mRNA"/>
</dbReference>
<dbReference type="EMBL" id="S78159">
    <property type="protein sequence ID" value="AAB34820.2"/>
    <property type="status" value="ALT_SEQ"/>
    <property type="molecule type" value="mRNA"/>
</dbReference>
<dbReference type="EMBL" id="D14822">
    <property type="protein sequence ID" value="BAA03559.1"/>
    <property type="status" value="ALT_SEQ"/>
    <property type="molecule type" value="mRNA"/>
</dbReference>
<dbReference type="EMBL" id="D14823">
    <property type="protein sequence ID" value="BAA03560.1"/>
    <property type="status" value="ALT_SEQ"/>
    <property type="molecule type" value="mRNA"/>
</dbReference>
<dbReference type="EMBL" id="S50186">
    <property type="status" value="NOT_ANNOTATED_CDS"/>
    <property type="molecule type" value="Genomic_DNA"/>
</dbReference>
<dbReference type="CCDS" id="CCDS47891.1">
    <molecule id="Q06455-2"/>
</dbReference>
<dbReference type="CCDS" id="CCDS56544.1">
    <molecule id="Q06455-3"/>
</dbReference>
<dbReference type="CCDS" id="CCDS6256.1">
    <molecule id="Q06455-1"/>
</dbReference>
<dbReference type="CCDS" id="CCDS6257.1">
    <molecule id="Q06455-4"/>
</dbReference>
<dbReference type="PIR" id="A57784">
    <property type="entry name" value="A57784"/>
</dbReference>
<dbReference type="PIR" id="C57784">
    <property type="entry name" value="C57784"/>
</dbReference>
<dbReference type="RefSeq" id="NP_001185554.1">
    <molecule id="Q06455-2"/>
    <property type="nucleotide sequence ID" value="NM_001198625.2"/>
</dbReference>
<dbReference type="RefSeq" id="NP_001185555.1">
    <molecule id="Q06455-1"/>
    <property type="nucleotide sequence ID" value="NM_001198626.2"/>
</dbReference>
<dbReference type="RefSeq" id="NP_001185556.1">
    <molecule id="Q06455-1"/>
    <property type="nucleotide sequence ID" value="NM_001198627.2"/>
</dbReference>
<dbReference type="RefSeq" id="NP_001185557.1">
    <molecule id="Q06455-1"/>
    <property type="nucleotide sequence ID" value="NM_001198628.2"/>
</dbReference>
<dbReference type="RefSeq" id="NP_001185558.1">
    <molecule id="Q06455-1"/>
    <property type="nucleotide sequence ID" value="NM_001198629.2"/>
</dbReference>
<dbReference type="RefSeq" id="NP_001185559.1">
    <molecule id="Q06455-1"/>
    <property type="nucleotide sequence ID" value="NM_001198630.2"/>
</dbReference>
<dbReference type="RefSeq" id="NP_001185560.1">
    <molecule id="Q06455-1"/>
    <property type="nucleotide sequence ID" value="NM_001198631.2"/>
</dbReference>
<dbReference type="RefSeq" id="NP_001185561.1">
    <molecule id="Q06455-2"/>
    <property type="nucleotide sequence ID" value="NM_001198632.2"/>
</dbReference>
<dbReference type="RefSeq" id="NP_001185562.1">
    <property type="nucleotide sequence ID" value="NM_001198633.1"/>
</dbReference>
<dbReference type="RefSeq" id="NP_001185563.1">
    <molecule id="Q06455-3"/>
    <property type="nucleotide sequence ID" value="NM_001198634.2"/>
</dbReference>
<dbReference type="RefSeq" id="NP_001185608.1">
    <property type="nucleotide sequence ID" value="NM_001198679.1"/>
</dbReference>
<dbReference type="RefSeq" id="NP_004340.1">
    <molecule id="Q06455-2"/>
    <property type="nucleotide sequence ID" value="NM_004349.4"/>
</dbReference>
<dbReference type="RefSeq" id="NP_783552.1">
    <molecule id="Q06455-1"/>
    <property type="nucleotide sequence ID" value="NM_175634.3"/>
</dbReference>
<dbReference type="RefSeq" id="NP_783553.1">
    <molecule id="Q06455-4"/>
    <property type="nucleotide sequence ID" value="NM_175635.3"/>
</dbReference>
<dbReference type="RefSeq" id="NP_783554.1">
    <molecule id="Q06455-4"/>
    <property type="nucleotide sequence ID" value="NM_175636.2"/>
</dbReference>
<dbReference type="RefSeq" id="XP_006716739.1">
    <property type="nucleotide sequence ID" value="XM_006716676.3"/>
</dbReference>
<dbReference type="RefSeq" id="XP_011515653.1">
    <molecule id="Q06455-1"/>
    <property type="nucleotide sequence ID" value="XM_011517351.3"/>
</dbReference>
<dbReference type="RefSeq" id="XP_011515654.1">
    <property type="nucleotide sequence ID" value="XM_011517352.2"/>
</dbReference>
<dbReference type="RefSeq" id="XP_011515655.1">
    <property type="nucleotide sequence ID" value="XM_011517353.2"/>
</dbReference>
<dbReference type="RefSeq" id="XP_016869420.1">
    <property type="nucleotide sequence ID" value="XM_017013931.1"/>
</dbReference>
<dbReference type="RefSeq" id="XP_016869421.1">
    <property type="nucleotide sequence ID" value="XM_017013932.1"/>
</dbReference>
<dbReference type="RefSeq" id="XP_016869422.1">
    <property type="nucleotide sequence ID" value="XM_017013933.1"/>
</dbReference>
<dbReference type="RefSeq" id="XP_016869423.1">
    <property type="nucleotide sequence ID" value="XM_017013934.1"/>
</dbReference>
<dbReference type="RefSeq" id="XP_016869424.1">
    <property type="nucleotide sequence ID" value="XM_017013935.1"/>
</dbReference>
<dbReference type="RefSeq" id="XP_016869425.1">
    <molecule id="Q06455-4"/>
    <property type="nucleotide sequence ID" value="XM_017013936.2"/>
</dbReference>
<dbReference type="RefSeq" id="XP_016869426.1">
    <property type="nucleotide sequence ID" value="XM_017013937.1"/>
</dbReference>
<dbReference type="RefSeq" id="XP_024303086.1">
    <molecule id="Q06455-4"/>
    <property type="nucleotide sequence ID" value="XM_024447318.2"/>
</dbReference>
<dbReference type="RefSeq" id="XP_047278329.1">
    <molecule id="Q06455-1"/>
    <property type="nucleotide sequence ID" value="XM_047422373.1"/>
</dbReference>
<dbReference type="RefSeq" id="XP_047278331.1">
    <molecule id="Q06455-6"/>
    <property type="nucleotide sequence ID" value="XM_047422375.1"/>
</dbReference>
<dbReference type="RefSeq" id="XP_054217388.1">
    <molecule id="Q06455-1"/>
    <property type="nucleotide sequence ID" value="XM_054361413.1"/>
</dbReference>
<dbReference type="RefSeq" id="XP_054217389.1">
    <molecule id="Q06455-1"/>
    <property type="nucleotide sequence ID" value="XM_054361414.1"/>
</dbReference>
<dbReference type="RefSeq" id="XP_054217390.1">
    <molecule id="Q06455-4"/>
    <property type="nucleotide sequence ID" value="XM_054361415.1"/>
</dbReference>
<dbReference type="RefSeq" id="XP_054217391.1">
    <molecule id="Q06455-4"/>
    <property type="nucleotide sequence ID" value="XM_054361416.1"/>
</dbReference>
<dbReference type="RefSeq" id="XP_054217394.1">
    <molecule id="Q06455-6"/>
    <property type="nucleotide sequence ID" value="XM_054361419.1"/>
</dbReference>
<dbReference type="PDB" id="1WQ6">
    <property type="method" value="X-ray"/>
    <property type="resolution" value="2.00 A"/>
    <property type="chains" value="A/B=335-403"/>
</dbReference>
<dbReference type="PDB" id="2DJ8">
    <property type="method" value="NMR"/>
    <property type="chains" value="A=505-551"/>
</dbReference>
<dbReference type="PDB" id="2H7B">
    <property type="method" value="NMR"/>
    <property type="chains" value="A=120-222"/>
</dbReference>
<dbReference type="PDB" id="2KNH">
    <property type="method" value="NMR"/>
    <property type="chains" value="A=119-216"/>
</dbReference>
<dbReference type="PDB" id="2KYG">
    <property type="method" value="NMR"/>
    <property type="chains" value="C=437-467"/>
</dbReference>
<dbReference type="PDB" id="2OD1">
    <property type="method" value="NMR"/>
    <property type="chains" value="A=510-559"/>
</dbReference>
<dbReference type="PDB" id="2ODD">
    <property type="method" value="NMR"/>
    <property type="chains" value="A=510-559"/>
</dbReference>
<dbReference type="PDB" id="2PP4">
    <property type="method" value="NMR"/>
    <property type="chains" value="A=119-225"/>
</dbReference>
<dbReference type="PDB" id="4JOL">
    <property type="method" value="X-ray"/>
    <property type="resolution" value="2.91 A"/>
    <property type="chains" value="A/B/C/D=338-400"/>
</dbReference>
<dbReference type="PDBsum" id="1WQ6"/>
<dbReference type="PDBsum" id="2DJ8"/>
<dbReference type="PDBsum" id="2H7B"/>
<dbReference type="PDBsum" id="2KNH"/>
<dbReference type="PDBsum" id="2KYG"/>
<dbReference type="PDBsum" id="2OD1"/>
<dbReference type="PDBsum" id="2ODD"/>
<dbReference type="PDBsum" id="2PP4"/>
<dbReference type="PDBsum" id="4JOL"/>
<dbReference type="BMRB" id="Q06455"/>
<dbReference type="SMR" id="Q06455"/>
<dbReference type="BioGRID" id="107310">
    <property type="interactions" value="119"/>
</dbReference>
<dbReference type="DIP" id="DIP-29401N"/>
<dbReference type="ELM" id="Q06455"/>
<dbReference type="FunCoup" id="Q06455">
    <property type="interactions" value="2460"/>
</dbReference>
<dbReference type="IntAct" id="Q06455">
    <property type="interactions" value="93"/>
</dbReference>
<dbReference type="MINT" id="Q06455"/>
<dbReference type="STRING" id="9606.ENSP00000402257"/>
<dbReference type="GlyGen" id="Q06455">
    <property type="glycosylation" value="4 sites, 1 O-linked glycan (2 sites)"/>
</dbReference>
<dbReference type="iPTMnet" id="Q06455"/>
<dbReference type="PhosphoSitePlus" id="Q06455"/>
<dbReference type="BioMuta" id="RUNX1T1"/>
<dbReference type="DMDM" id="2498595"/>
<dbReference type="jPOST" id="Q06455"/>
<dbReference type="MassIVE" id="Q06455"/>
<dbReference type="PaxDb" id="9606-ENSP00000402257"/>
<dbReference type="PeptideAtlas" id="Q06455"/>
<dbReference type="ProteomicsDB" id="17401"/>
<dbReference type="ProteomicsDB" id="58447">
    <molecule id="Q06455-1"/>
</dbReference>
<dbReference type="ProteomicsDB" id="58448">
    <molecule id="Q06455-2"/>
</dbReference>
<dbReference type="ProteomicsDB" id="69196"/>
<dbReference type="Antibodypedia" id="25672">
    <property type="antibodies" value="272 antibodies from 34 providers"/>
</dbReference>
<dbReference type="DNASU" id="862"/>
<dbReference type="Ensembl" id="ENST00000360348.6">
    <molecule id="Q06455-4"/>
    <property type="protein sequence ID" value="ENSP00000353504.2"/>
    <property type="gene ID" value="ENSG00000079102.18"/>
</dbReference>
<dbReference type="Ensembl" id="ENST00000396218.5">
    <molecule id="Q06455-2"/>
    <property type="protein sequence ID" value="ENSP00000379520.1"/>
    <property type="gene ID" value="ENSG00000079102.18"/>
</dbReference>
<dbReference type="Ensembl" id="ENST00000422361.6">
    <molecule id="Q06455-4"/>
    <property type="protein sequence ID" value="ENSP00000390137.2"/>
    <property type="gene ID" value="ENSG00000079102.18"/>
</dbReference>
<dbReference type="Ensembl" id="ENST00000517919.6">
    <molecule id="Q06455-1"/>
    <property type="protein sequence ID" value="ENSP00000429506.2"/>
    <property type="gene ID" value="ENSG00000079102.18"/>
</dbReference>
<dbReference type="Ensembl" id="ENST00000518317.6">
    <molecule id="Q06455-2"/>
    <property type="protein sequence ID" value="ENSP00000429062.2"/>
    <property type="gene ID" value="ENSG00000079102.18"/>
</dbReference>
<dbReference type="Ensembl" id="ENST00000518844.5">
    <molecule id="Q06455-2"/>
    <property type="protein sequence ID" value="ENSP00000430728.1"/>
    <property type="gene ID" value="ENSG00000079102.18"/>
</dbReference>
<dbReference type="Ensembl" id="ENST00000518954.6">
    <molecule id="Q06455-1"/>
    <property type="protein sequence ID" value="ENSP00000430080.2"/>
    <property type="gene ID" value="ENSG00000079102.18"/>
</dbReference>
<dbReference type="Ensembl" id="ENST00000519847.6">
    <molecule id="Q06455-1"/>
    <property type="protein sequence ID" value="ENSP00000430204.2"/>
    <property type="gene ID" value="ENSG00000079102.18"/>
</dbReference>
<dbReference type="Ensembl" id="ENST00000520724.5">
    <molecule id="Q06455-3"/>
    <property type="protein sequence ID" value="ENSP00000428742.2"/>
    <property type="gene ID" value="ENSG00000079102.18"/>
</dbReference>
<dbReference type="Ensembl" id="ENST00000523629.7">
    <molecule id="Q06455-1"/>
    <property type="protein sequence ID" value="ENSP00000428543.1"/>
    <property type="gene ID" value="ENSG00000079102.18"/>
</dbReference>
<dbReference type="GeneID" id="862"/>
<dbReference type="KEGG" id="hsa:862"/>
<dbReference type="MANE-Select" id="ENST00000523629.7">
    <property type="protein sequence ID" value="ENSP00000428543.1"/>
    <property type="RefSeq nucleotide sequence ID" value="NM_175634.3"/>
    <property type="RefSeq protein sequence ID" value="NP_783552.1"/>
</dbReference>
<dbReference type="UCSC" id="uc003yfc.3">
    <molecule id="Q06455-1"/>
    <property type="organism name" value="human"/>
</dbReference>
<dbReference type="AGR" id="HGNC:1535"/>
<dbReference type="CTD" id="862"/>
<dbReference type="DisGeNET" id="862"/>
<dbReference type="GeneCards" id="RUNX1T1"/>
<dbReference type="HGNC" id="HGNC:1535">
    <property type="gene designation" value="RUNX1T1"/>
</dbReference>
<dbReference type="HPA" id="ENSG00000079102">
    <property type="expression patterns" value="Tissue enhanced (brain)"/>
</dbReference>
<dbReference type="MalaCards" id="RUNX1T1"/>
<dbReference type="MIM" id="133435">
    <property type="type" value="gene"/>
</dbReference>
<dbReference type="neXtProt" id="NX_Q06455"/>
<dbReference type="OpenTargets" id="ENSG00000079102"/>
<dbReference type="Orphanet" id="102724">
    <property type="disease" value="Acute myeloid leukemia with t(8;21)(q22;q22) translocation"/>
</dbReference>
<dbReference type="PharmGKB" id="PA26111"/>
<dbReference type="VEuPathDB" id="HostDB:ENSG00000079102"/>
<dbReference type="eggNOG" id="ENOG502QTD6">
    <property type="taxonomic scope" value="Eukaryota"/>
</dbReference>
<dbReference type="GeneTree" id="ENSGT00950000183176"/>
<dbReference type="HOGENOM" id="CLU_022077_2_0_1"/>
<dbReference type="InParanoid" id="Q06455"/>
<dbReference type="OMA" id="HDMIATE"/>
<dbReference type="OrthoDB" id="8872930at2759"/>
<dbReference type="PAN-GO" id="Q06455">
    <property type="GO annotations" value="3 GO annotations based on evolutionary models"/>
</dbReference>
<dbReference type="PhylomeDB" id="Q06455"/>
<dbReference type="TreeFam" id="TF106303"/>
<dbReference type="PathwayCommons" id="Q06455"/>
<dbReference type="SignaLink" id="Q06455"/>
<dbReference type="SIGNOR" id="Q06455"/>
<dbReference type="BioGRID-ORCS" id="862">
    <property type="hits" value="16 hits in 1158 CRISPR screens"/>
</dbReference>
<dbReference type="ChiTaRS" id="RUNX1T1">
    <property type="organism name" value="human"/>
</dbReference>
<dbReference type="EvolutionaryTrace" id="Q06455"/>
<dbReference type="GeneWiki" id="RUNX1T1"/>
<dbReference type="GenomeRNAi" id="862"/>
<dbReference type="Pharos" id="Q06455">
    <property type="development level" value="Tbio"/>
</dbReference>
<dbReference type="PRO" id="PR:Q06455"/>
<dbReference type="Proteomes" id="UP000005640">
    <property type="component" value="Chromosome 8"/>
</dbReference>
<dbReference type="RNAct" id="Q06455">
    <property type="molecule type" value="protein"/>
</dbReference>
<dbReference type="Bgee" id="ENSG00000079102">
    <property type="expression patterns" value="Expressed in secondary oocyte and 200 other cell types or tissues"/>
</dbReference>
<dbReference type="ExpressionAtlas" id="Q06455">
    <property type="expression patterns" value="baseline and differential"/>
</dbReference>
<dbReference type="GO" id="GO:0016363">
    <property type="term" value="C:nuclear matrix"/>
    <property type="evidence" value="ECO:0000314"/>
    <property type="project" value="UniProtKB"/>
</dbReference>
<dbReference type="GO" id="GO:0005654">
    <property type="term" value="C:nucleoplasm"/>
    <property type="evidence" value="ECO:0000314"/>
    <property type="project" value="HPA"/>
</dbReference>
<dbReference type="GO" id="GO:0005634">
    <property type="term" value="C:nucleus"/>
    <property type="evidence" value="ECO:0000318"/>
    <property type="project" value="GO_Central"/>
</dbReference>
<dbReference type="GO" id="GO:0003677">
    <property type="term" value="F:DNA binding"/>
    <property type="evidence" value="ECO:0007669"/>
    <property type="project" value="UniProtKB-KW"/>
</dbReference>
<dbReference type="GO" id="GO:0140297">
    <property type="term" value="F:DNA-binding transcription factor binding"/>
    <property type="evidence" value="ECO:0000353"/>
    <property type="project" value="UniProtKB"/>
</dbReference>
<dbReference type="GO" id="GO:0003714">
    <property type="term" value="F:transcription corepressor activity"/>
    <property type="evidence" value="ECO:0000314"/>
    <property type="project" value="UniProtKB"/>
</dbReference>
<dbReference type="GO" id="GO:0008270">
    <property type="term" value="F:zinc ion binding"/>
    <property type="evidence" value="ECO:0007669"/>
    <property type="project" value="UniProtKB-KW"/>
</dbReference>
<dbReference type="GO" id="GO:0006351">
    <property type="term" value="P:DNA-templated transcription"/>
    <property type="evidence" value="ECO:0007669"/>
    <property type="project" value="InterPro"/>
</dbReference>
<dbReference type="GO" id="GO:0045892">
    <property type="term" value="P:negative regulation of DNA-templated transcription"/>
    <property type="evidence" value="ECO:0000314"/>
    <property type="project" value="UniProtKB"/>
</dbReference>
<dbReference type="GO" id="GO:0045599">
    <property type="term" value="P:negative regulation of fat cell differentiation"/>
    <property type="evidence" value="ECO:0000250"/>
    <property type="project" value="UniProtKB"/>
</dbReference>
<dbReference type="FunFam" id="6.10.140.2220:FF:000001">
    <property type="entry name" value="CBFA2/RUNX1 translocation partner 3"/>
    <property type="match status" value="1"/>
</dbReference>
<dbReference type="FunFam" id="1.20.120.1110:FF:000001">
    <property type="entry name" value="RUNX1 translocation partner 1"/>
    <property type="match status" value="1"/>
</dbReference>
<dbReference type="Gene3D" id="6.10.140.2220">
    <property type="match status" value="1"/>
</dbReference>
<dbReference type="Gene3D" id="6.10.250.230">
    <property type="match status" value="1"/>
</dbReference>
<dbReference type="Gene3D" id="1.20.120.1110">
    <property type="entry name" value="TAFH/NHR1 domain"/>
    <property type="match status" value="1"/>
</dbReference>
<dbReference type="IDEAL" id="IID00381"/>
<dbReference type="InterPro" id="IPR013290">
    <property type="entry name" value="CBFA2T1"/>
</dbReference>
<dbReference type="InterPro" id="IPR013289">
    <property type="entry name" value="CBFA2T1/2/3"/>
</dbReference>
<dbReference type="InterPro" id="IPR014896">
    <property type="entry name" value="NHR2"/>
</dbReference>
<dbReference type="InterPro" id="IPR037249">
    <property type="entry name" value="TAFH/NHR1_dom_sf"/>
</dbReference>
<dbReference type="InterPro" id="IPR003894">
    <property type="entry name" value="TAFH_NHR1"/>
</dbReference>
<dbReference type="InterPro" id="IPR002893">
    <property type="entry name" value="Znf_MYND"/>
</dbReference>
<dbReference type="PANTHER" id="PTHR10379">
    <property type="entry name" value="MTG8 ETO EIGHT TWENTY ONE PROTEIN"/>
    <property type="match status" value="1"/>
</dbReference>
<dbReference type="PANTHER" id="PTHR10379:SF5">
    <property type="entry name" value="PROTEIN CBFA2T1"/>
    <property type="match status" value="1"/>
</dbReference>
<dbReference type="Pfam" id="PF08788">
    <property type="entry name" value="NHR2"/>
    <property type="match status" value="1"/>
</dbReference>
<dbReference type="Pfam" id="PF07531">
    <property type="entry name" value="TAFH"/>
    <property type="match status" value="1"/>
</dbReference>
<dbReference type="Pfam" id="PF01753">
    <property type="entry name" value="zf-MYND"/>
    <property type="match status" value="1"/>
</dbReference>
<dbReference type="PRINTS" id="PR01875">
    <property type="entry name" value="ETOFAMILY"/>
</dbReference>
<dbReference type="PRINTS" id="PR01876">
    <property type="entry name" value="MTG8PROTEIN"/>
</dbReference>
<dbReference type="SMART" id="SM00549">
    <property type="entry name" value="TAFH"/>
    <property type="match status" value="1"/>
</dbReference>
<dbReference type="SUPFAM" id="SSF144232">
    <property type="entry name" value="HIT/MYND zinc finger-like"/>
    <property type="match status" value="1"/>
</dbReference>
<dbReference type="SUPFAM" id="SSF158553">
    <property type="entry name" value="TAFH domain-like"/>
    <property type="match status" value="1"/>
</dbReference>
<dbReference type="PROSITE" id="PS51119">
    <property type="entry name" value="TAFH"/>
    <property type="match status" value="1"/>
</dbReference>
<dbReference type="PROSITE" id="PS01360">
    <property type="entry name" value="ZF_MYND_1"/>
    <property type="match status" value="1"/>
</dbReference>
<dbReference type="PROSITE" id="PS50865">
    <property type="entry name" value="ZF_MYND_2"/>
    <property type="match status" value="1"/>
</dbReference>
<accession>Q06455</accession>
<accession>B7Z4P4</accession>
<accession>E7EPN4</accession>
<accession>O14784</accession>
<accession>Q06456</accession>
<accession>Q14873</accession>
<accession>Q16239</accession>
<accession>Q16346</accession>
<accession>Q16347</accession>
<accession>Q6IBL1</accession>
<accession>Q6NXH1</accession>
<accession>Q7Z4J5</accession>
<accession>Q92479</accession>
<accession>Q9BRZ0</accession>
<evidence type="ECO:0000250" key="1">
    <source>
        <dbReference type="UniProtKB" id="Q61909"/>
    </source>
</evidence>
<evidence type="ECO:0000255" key="2">
    <source>
        <dbReference type="PROSITE-ProRule" id="PRU00134"/>
    </source>
</evidence>
<evidence type="ECO:0000255" key="3">
    <source>
        <dbReference type="PROSITE-ProRule" id="PRU00440"/>
    </source>
</evidence>
<evidence type="ECO:0000256" key="4">
    <source>
        <dbReference type="SAM" id="MobiDB-lite"/>
    </source>
</evidence>
<evidence type="ECO:0000269" key="5">
    <source>
    </source>
</evidence>
<evidence type="ECO:0000269" key="6">
    <source>
    </source>
</evidence>
<evidence type="ECO:0000269" key="7">
    <source>
    </source>
</evidence>
<evidence type="ECO:0000269" key="8">
    <source>
    </source>
</evidence>
<evidence type="ECO:0000269" key="9">
    <source>
    </source>
</evidence>
<evidence type="ECO:0000269" key="10">
    <source>
    </source>
</evidence>
<evidence type="ECO:0000269" key="11">
    <source>
    </source>
</evidence>
<evidence type="ECO:0000269" key="12">
    <source>
    </source>
</evidence>
<evidence type="ECO:0000269" key="13">
    <source>
    </source>
</evidence>
<evidence type="ECO:0000269" key="14">
    <source>
    </source>
</evidence>
<evidence type="ECO:0000269" key="15">
    <source>
    </source>
</evidence>
<evidence type="ECO:0000269" key="16">
    <source>
    </source>
</evidence>
<evidence type="ECO:0000269" key="17">
    <source>
    </source>
</evidence>
<evidence type="ECO:0000269" key="18">
    <source>
    </source>
</evidence>
<evidence type="ECO:0000269" key="19">
    <source>
    </source>
</evidence>
<evidence type="ECO:0000303" key="20">
    <source>
    </source>
</evidence>
<evidence type="ECO:0000303" key="21">
    <source>
    </source>
</evidence>
<evidence type="ECO:0000303" key="22">
    <source>
    </source>
</evidence>
<evidence type="ECO:0000303" key="23">
    <source>
    </source>
</evidence>
<evidence type="ECO:0000303" key="24">
    <source>
    </source>
</evidence>
<evidence type="ECO:0000303" key="25">
    <source ref="4"/>
</evidence>
<evidence type="ECO:0000303" key="26">
    <source ref="5"/>
</evidence>
<evidence type="ECO:0000305" key="27"/>
<evidence type="ECO:0007744" key="28">
    <source>
    </source>
</evidence>
<evidence type="ECO:0007829" key="29">
    <source>
        <dbReference type="PDB" id="1WQ6"/>
    </source>
</evidence>
<evidence type="ECO:0007829" key="30">
    <source>
        <dbReference type="PDB" id="2DJ8"/>
    </source>
</evidence>
<evidence type="ECO:0007829" key="31">
    <source>
        <dbReference type="PDB" id="2H7B"/>
    </source>
</evidence>
<evidence type="ECO:0007829" key="32">
    <source>
        <dbReference type="PDB" id="2KYG"/>
    </source>
</evidence>
<evidence type="ECO:0007829" key="33">
    <source>
        <dbReference type="PDB" id="2ODD"/>
    </source>
</evidence>
<protein>
    <recommendedName>
        <fullName>Protein CBFA2T1</fullName>
    </recommendedName>
    <alternativeName>
        <fullName>Cyclin-D-related protein</fullName>
    </alternativeName>
    <alternativeName>
        <fullName>Eight twenty one protein</fullName>
    </alternativeName>
    <alternativeName>
        <fullName>Protein ETO</fullName>
    </alternativeName>
    <alternativeName>
        <fullName>Protein MTG8</fullName>
    </alternativeName>
    <alternativeName>
        <fullName>Zinc finger MYND domain-containing protein 2</fullName>
    </alternativeName>
</protein>
<proteinExistence type="evidence at protein level"/>
<comment type="function">
    <text evidence="1 5 6 10 15 16 20 22">Transcriptional corepressor which facilitates transcriptional repression via its association with DNA-binding transcription factors and recruitment of other corepressors and histone-modifying enzymes (PubMed:10688654, PubMed:12559562, PubMed:15203199). Can repress the expression of MMP7 in a ZBTB33-dependent manner (PubMed:23251453). Can repress transactivation mediated by TCF12 (PubMed:16803958). Acts as a negative regulator of adipogenesis (By similarity). The AML1-MTG8/ETO fusion protein frequently found in leukemic cells is involved in leukemogenesis and contributes to hematopoietic stem/progenitor cell self-renewal (PubMed:23812588).</text>
</comment>
<comment type="subunit">
    <text evidence="5 6 7 9 10 12 13 14 16">Homooligomer. Homotetramerization is mediated by nervy homology region 2 (NRH2). Can interact with CBFA2T2 and CBFA2T3; heterotetramerization between members of the CBFA2T family is proposed. Interacts with TCF12, SIN3A, HDAC1, HDAC2, HDAC3, NCOR1, NCOR2. Interacts with ATN1 (via its N-terminus); the interaction enhances the transcriptional repression. Interacts (via its N-terminus) with ZBTB16; the interaction increases the transcription repression activity of ZBTB16 (PubMed:10688654). AML1-MTG8/ETO fusion protein interacts with CBFB. AML1-MTG8/ETO is part of a stable transcription factor complex AETFC in leukemic cells; AETFC formation seems to be involved in recruitment of EP300. AML1-MTG8/ETO nervy homology region 2-mediated oligomerization is proposed to be homotypic, required for AML1-MTG8/ETO-mediated transformation of primary hematopoietic cells and is required for AML1-MTG8/ETO interaction with TCF12.</text>
</comment>
<comment type="interaction">
    <interactant intactId="EBI-743342">
        <id>Q06455</id>
    </interactant>
    <interactant intactId="EBI-347233">
        <id>O75376</id>
        <label>NCOR1</label>
    </interactant>
    <organismsDiffer>false</organismsDiffer>
    <experiments>5</experiments>
</comment>
<comment type="interaction">
    <interactant intactId="EBI-743342">
        <id>Q06455</id>
    </interactant>
    <interactant intactId="EBI-3957793">
        <id>Q9GZV8</id>
        <label>PRDM14</label>
    </interactant>
    <organismsDiffer>false</organismsDiffer>
    <experiments>3</experiments>
</comment>
<comment type="interaction">
    <interactant intactId="EBI-743342">
        <id>Q06455</id>
    </interactant>
    <interactant intactId="EBI-298336">
        <id>P08047</id>
        <label>SP1</label>
    </interactant>
    <organismsDiffer>false</organismsDiffer>
    <experiments>2</experiments>
</comment>
<comment type="interaction">
    <interactant intactId="EBI-743342">
        <id>Q06455</id>
    </interactant>
    <interactant intactId="EBI-643037">
        <id>Q9QX47</id>
        <label>Son</label>
    </interactant>
    <organismsDiffer>true</organismsDiffer>
    <experiments>4</experiments>
</comment>
<comment type="interaction">
    <interactant intactId="EBI-11984663">
        <id>Q06455-2</id>
    </interactant>
    <interactant intactId="EBI-742038">
        <id>Q9P2A4</id>
        <label>ABI3</label>
    </interactant>
    <organismsDiffer>false</organismsDiffer>
    <experiments>3</experiments>
</comment>
<comment type="interaction">
    <interactant intactId="EBI-11984663">
        <id>Q06455-2</id>
    </interactant>
    <interactant intactId="EBI-10173507">
        <id>Q6UY14-3</id>
        <label>ADAMTSL4</label>
    </interactant>
    <organismsDiffer>false</organismsDiffer>
    <experiments>3</experiments>
</comment>
<comment type="interaction">
    <interactant intactId="EBI-11984663">
        <id>Q06455-2</id>
    </interactant>
    <interactant intactId="EBI-750254">
        <id>Q9BRR9</id>
        <label>ARHGAP9</label>
    </interactant>
    <organismsDiffer>false</organismsDiffer>
    <experiments>3</experiments>
</comment>
<comment type="interaction">
    <interactant intactId="EBI-11984663">
        <id>Q06455-2</id>
    </interactant>
    <interactant intactId="EBI-11954292">
        <id>Q86V38</id>
        <label>ATN1</label>
    </interactant>
    <organismsDiffer>false</organismsDiffer>
    <experiments>3</experiments>
</comment>
<comment type="interaction">
    <interactant intactId="EBI-11984663">
        <id>Q06455-2</id>
    </interactant>
    <interactant intactId="EBI-514538">
        <id>Q13490</id>
        <label>BIRC2</label>
    </interactant>
    <organismsDiffer>false</organismsDiffer>
    <experiments>3</experiments>
</comment>
<comment type="interaction">
    <interactant intactId="EBI-11984663">
        <id>Q06455-2</id>
    </interactant>
    <interactant intactId="EBI-11524851">
        <id>Q8NA61-2</id>
        <label>CBY2</label>
    </interactant>
    <organismsDiffer>false</organismsDiffer>
    <experiments>3</experiments>
</comment>
<comment type="interaction">
    <interactant intactId="EBI-11984663">
        <id>Q06455-2</id>
    </interactant>
    <interactant intactId="EBI-750686">
        <id>Q8NCU1</id>
        <label>CCDC197</label>
    </interactant>
    <organismsDiffer>false</organismsDiffer>
    <experiments>3</experiments>
</comment>
<comment type="interaction">
    <interactant intactId="EBI-11984663">
        <id>Q06455-2</id>
    </interactant>
    <interactant intactId="EBI-396137">
        <id>Q9UJX2</id>
        <label>CDC23</label>
    </interactant>
    <organismsDiffer>false</organismsDiffer>
    <experiments>3</experiments>
</comment>
<comment type="interaction">
    <interactant intactId="EBI-11984663">
        <id>Q06455-2</id>
    </interactant>
    <interactant intactId="EBI-1181367">
        <id>Q01850</id>
        <label>CDR2</label>
    </interactant>
    <organismsDiffer>false</organismsDiffer>
    <experiments>3</experiments>
</comment>
<comment type="interaction">
    <interactant intactId="EBI-11984663">
        <id>Q06455-2</id>
    </interactant>
    <interactant intactId="EBI-11123098">
        <id>Q9Y592-2</id>
        <label>CEP83</label>
    </interactant>
    <organismsDiffer>false</organismsDiffer>
    <experiments>3</experiments>
</comment>
<comment type="interaction">
    <interactant intactId="EBI-11984663">
        <id>Q06455-2</id>
    </interactant>
    <interactant intactId="EBI-3866319">
        <id>Q9Y2V7</id>
        <label>COG6</label>
    </interactant>
    <organismsDiffer>false</organismsDiffer>
    <experiments>3</experiments>
</comment>
<comment type="interaction">
    <interactant intactId="EBI-11984663">
        <id>Q06455-2</id>
    </interactant>
    <interactant intactId="EBI-11523759">
        <id>Q8N684-3</id>
        <label>CPSF7</label>
    </interactant>
    <organismsDiffer>false</organismsDiffer>
    <experiments>3</experiments>
</comment>
<comment type="interaction">
    <interactant intactId="EBI-11984663">
        <id>Q06455-2</id>
    </interactant>
    <interactant intactId="EBI-748597">
        <id>Q05D60</id>
        <label>DEUP1</label>
    </interactant>
    <organismsDiffer>false</organismsDiffer>
    <experiments>3</experiments>
</comment>
<comment type="interaction">
    <interactant intactId="EBI-11984663">
        <id>Q06455-2</id>
    </interactant>
    <interactant intactId="EBI-373319">
        <id>Q96C01</id>
        <label>FAM136A</label>
    </interactant>
    <organismsDiffer>false</organismsDiffer>
    <experiments>3</experiments>
</comment>
<comment type="interaction">
    <interactant intactId="EBI-11984663">
        <id>Q06455-2</id>
    </interactant>
    <interactant intactId="EBI-8468186">
        <id>Q8IZU1</id>
        <label>FAM9A</label>
    </interactant>
    <organismsDiffer>false</organismsDiffer>
    <experiments>3</experiments>
</comment>
<comment type="interaction">
    <interactant intactId="EBI-11984663">
        <id>Q06455-2</id>
    </interactant>
    <interactant intactId="EBI-748420">
        <id>Q9NSC5</id>
        <label>HOMER3</label>
    </interactant>
    <organismsDiffer>false</organismsDiffer>
    <experiments>3</experiments>
</comment>
<comment type="interaction">
    <interactant intactId="EBI-11984663">
        <id>Q06455-2</id>
    </interactant>
    <interactant intactId="EBI-5329558">
        <id>P14652</id>
        <label>HOXB2</label>
    </interactant>
    <organismsDiffer>false</organismsDiffer>
    <experiments>3</experiments>
</comment>
<comment type="interaction">
    <interactant intactId="EBI-11984663">
        <id>Q06455-2</id>
    </interactant>
    <interactant intactId="EBI-8638439">
        <id>Q8IYA8</id>
        <label>IHO1</label>
    </interactant>
    <organismsDiffer>false</organismsDiffer>
    <experiments>3</experiments>
</comment>
<comment type="interaction">
    <interactant intactId="EBI-11984663">
        <id>Q06455-2</id>
    </interactant>
    <interactant intactId="EBI-739493">
        <id>Q6ZU52</id>
        <label>KIAA0408</label>
    </interactant>
    <organismsDiffer>false</organismsDiffer>
    <experiments>5</experiments>
</comment>
<comment type="interaction">
    <interactant intactId="EBI-11984663">
        <id>Q06455-2</id>
    </interactant>
    <interactant intactId="EBI-14069005">
        <id>Q9BVG8-5</id>
        <label>KIFC3</label>
    </interactant>
    <organismsDiffer>false</organismsDiffer>
    <experiments>3</experiments>
</comment>
<comment type="interaction">
    <interactant intactId="EBI-11984663">
        <id>Q06455-2</id>
    </interactant>
    <interactant intactId="EBI-3211278">
        <id>Q9C075</id>
        <label>KRT23</label>
    </interactant>
    <organismsDiffer>false</organismsDiffer>
    <experiments>3</experiments>
</comment>
<comment type="interaction">
    <interactant intactId="EBI-11984663">
        <id>Q06455-2</id>
    </interactant>
    <interactant intactId="EBI-3044087">
        <id>Q7Z3Y8</id>
        <label>KRT27</label>
    </interactant>
    <organismsDiffer>false</organismsDiffer>
    <experiments>3</experiments>
</comment>
<comment type="interaction">
    <interactant intactId="EBI-11984663">
        <id>Q06455-2</id>
    </interactant>
    <interactant intactId="EBI-1049638">
        <id>Q14525</id>
        <label>KRT33B</label>
    </interactant>
    <organismsDiffer>false</organismsDiffer>
    <experiments>3</experiments>
</comment>
<comment type="interaction">
    <interactant intactId="EBI-11984663">
        <id>Q06455-2</id>
    </interactant>
    <interactant intactId="EBI-1058674">
        <id>Q92764</id>
        <label>KRT35</label>
    </interactant>
    <organismsDiffer>false</organismsDiffer>
    <experiments>3</experiments>
</comment>
<comment type="interaction">
    <interactant intactId="EBI-11984663">
        <id>Q06455-2</id>
    </interactant>
    <interactant intactId="EBI-10241252">
        <id>Q3SY46</id>
        <label>KRTAP13-3</label>
    </interactant>
    <organismsDiffer>false</organismsDiffer>
    <experiments>3</experiments>
</comment>
<comment type="interaction">
    <interactant intactId="EBI-11984663">
        <id>Q06455-2</id>
    </interactant>
    <interactant intactId="EBI-12805508">
        <id>Q3LI70</id>
        <label>KRTAP19-6</label>
    </interactant>
    <organismsDiffer>false</organismsDiffer>
    <experiments>3</experiments>
</comment>
<comment type="interaction">
    <interactant intactId="EBI-11984663">
        <id>Q06455-2</id>
    </interactant>
    <interactant intactId="EBI-11962084">
        <id>Q3LI66</id>
        <label>KRTAP6-2</label>
    </interactant>
    <organismsDiffer>false</organismsDiffer>
    <experiments>3</experiments>
</comment>
<comment type="interaction">
    <interactant intactId="EBI-11984663">
        <id>Q06455-2</id>
    </interactant>
    <interactant intactId="EBI-22311199">
        <id>Q3LI67</id>
        <label>KRTAP6-3</label>
    </interactant>
    <organismsDiffer>false</organismsDiffer>
    <experiments>3</experiments>
</comment>
<comment type="interaction">
    <interactant intactId="EBI-11984663">
        <id>Q06455-2</id>
    </interactant>
    <interactant intactId="EBI-12039345">
        <id>Q9UBR4-2</id>
        <label>LHX3</label>
    </interactant>
    <organismsDiffer>false</organismsDiffer>
    <experiments>3</experiments>
</comment>
<comment type="interaction">
    <interactant intactId="EBI-11984663">
        <id>Q06455-2</id>
    </interactant>
    <interactant intactId="EBI-744222">
        <id>O60711</id>
        <label>LPXN</label>
    </interactant>
    <organismsDiffer>false</organismsDiffer>
    <experiments>3</experiments>
</comment>
<comment type="interaction">
    <interactant intactId="EBI-11984663">
        <id>Q06455-2</id>
    </interactant>
    <interactant intactId="EBI-1216080">
        <id>Q9Y250</id>
        <label>LZTS1</label>
    </interactant>
    <organismsDiffer>false</organismsDiffer>
    <experiments>3</experiments>
</comment>
<comment type="interaction">
    <interactant intactId="EBI-11984663">
        <id>Q06455-2</id>
    </interactant>
    <interactant intactId="EBI-16439278">
        <id>Q6FHY5</id>
        <label>MEOX2</label>
    </interactant>
    <organismsDiffer>false</organismsDiffer>
    <experiments>3</experiments>
</comment>
<comment type="interaction">
    <interactant intactId="EBI-11984663">
        <id>Q06455-2</id>
    </interactant>
    <interactant intactId="EBI-10172526">
        <id>Q9UJV3-2</id>
        <label>MID2</label>
    </interactant>
    <organismsDiffer>false</organismsDiffer>
    <experiments>3</experiments>
</comment>
<comment type="interaction">
    <interactant intactId="EBI-11984663">
        <id>Q06455-2</id>
    </interactant>
    <interactant intactId="EBI-10172876">
        <id>Q7Z6G3-2</id>
        <label>NECAB2</label>
    </interactant>
    <organismsDiffer>false</organismsDiffer>
    <experiments>3</experiments>
</comment>
<comment type="interaction">
    <interactant intactId="EBI-11984663">
        <id>Q06455-2</id>
    </interactant>
    <interactant intactId="EBI-536879">
        <id>O43482</id>
        <label>OIP5</label>
    </interactant>
    <organismsDiffer>false</organismsDiffer>
    <experiments>3</experiments>
</comment>
<comment type="interaction">
    <interactant intactId="EBI-11984663">
        <id>Q06455-2</id>
    </interactant>
    <interactant intactId="EBI-348567">
        <id>O75928-2</id>
        <label>PIAS2</label>
    </interactant>
    <organismsDiffer>false</organismsDiffer>
    <experiments>5</experiments>
</comment>
<comment type="interaction">
    <interactant intactId="EBI-11984663">
        <id>Q06455-2</id>
    </interactant>
    <interactant intactId="EBI-750734">
        <id>Q9NRY6</id>
        <label>PLSCR3</label>
    </interactant>
    <organismsDiffer>false</organismsDiffer>
    <experiments>3</experiments>
</comment>
<comment type="interaction">
    <interactant intactId="EBI-11984663">
        <id>Q06455-2</id>
    </interactant>
    <interactant intactId="EBI-3957793">
        <id>Q9GZV8</id>
        <label>PRDM14</label>
    </interactant>
    <organismsDiffer>false</organismsDiffer>
    <experiments>6</experiments>
</comment>
<comment type="interaction">
    <interactant intactId="EBI-11984663">
        <id>Q06455-2</id>
    </interactant>
    <interactant intactId="EBI-11320284">
        <id>Q9NQX0</id>
        <label>PRDM6</label>
    </interactant>
    <organismsDiffer>false</organismsDiffer>
    <experiments>3</experiments>
</comment>
<comment type="interaction">
    <interactant intactId="EBI-11984663">
        <id>Q06455-2</id>
    </interactant>
    <interactant intactId="EBI-2805516">
        <id>P31321</id>
        <label>PRKAR1B</label>
    </interactant>
    <organismsDiffer>false</organismsDiffer>
    <experiments>3</experiments>
</comment>
<comment type="interaction">
    <interactant intactId="EBI-11984663">
        <id>Q06455-2</id>
    </interactant>
    <interactant intactId="EBI-948156">
        <id>Q9Y4B4</id>
        <label>RAD54L2</label>
    </interactant>
    <organismsDiffer>false</organismsDiffer>
    <experiments>3</experiments>
</comment>
<comment type="interaction">
    <interactant intactId="EBI-11984663">
        <id>Q06455-2</id>
    </interactant>
    <interactant intactId="EBI-10829018">
        <id>Q04864-2</id>
        <label>REL</label>
    </interactant>
    <organismsDiffer>false</organismsDiffer>
    <experiments>3</experiments>
</comment>
<comment type="interaction">
    <interactant intactId="EBI-11984663">
        <id>Q06455-2</id>
    </interactant>
    <interactant intactId="EBI-2340927">
        <id>P78317</id>
        <label>RNF4</label>
    </interactant>
    <organismsDiffer>false</organismsDiffer>
    <experiments>3</experiments>
</comment>
<comment type="interaction">
    <interactant intactId="EBI-11984663">
        <id>Q06455-2</id>
    </interactant>
    <interactant intactId="EBI-743502">
        <id>Q8WWV3</id>
        <label>RTN4IP1</label>
    </interactant>
    <organismsDiffer>false</organismsDiffer>
    <experiments>3</experiments>
</comment>
<comment type="interaction">
    <interactant intactId="EBI-11984663">
        <id>Q06455-2</id>
    </interactant>
    <interactant intactId="EBI-741237">
        <id>O60504</id>
        <label>SORBS3</label>
    </interactant>
    <organismsDiffer>false</organismsDiffer>
    <experiments>3</experiments>
</comment>
<comment type="interaction">
    <interactant intactId="EBI-11984663">
        <id>Q06455-2</id>
    </interactant>
    <interactant intactId="EBI-6872807">
        <id>Q8N0S2</id>
        <label>SYCE1</label>
    </interactant>
    <organismsDiffer>false</organismsDiffer>
    <experiments>3</experiments>
</comment>
<comment type="interaction">
    <interactant intactId="EBI-11984663">
        <id>Q06455-2</id>
    </interactant>
    <interactant intactId="EBI-10180409">
        <id>Q969V4</id>
        <label>TEKT1</label>
    </interactant>
    <organismsDiffer>false</organismsDiffer>
    <experiments>3</experiments>
</comment>
<comment type="interaction">
    <interactant intactId="EBI-11984663">
        <id>Q06455-2</id>
    </interactant>
    <interactant intactId="EBI-1105213">
        <id>Q9UBB9</id>
        <label>TFIP11</label>
    </interactant>
    <organismsDiffer>false</organismsDiffer>
    <experiments>3</experiments>
</comment>
<comment type="interaction">
    <interactant intactId="EBI-11984663">
        <id>Q06455-2</id>
    </interactant>
    <interactant intactId="EBI-2130429">
        <id>Q9BYV2</id>
        <label>TRIM54</label>
    </interactant>
    <organismsDiffer>false</organismsDiffer>
    <experiments>3</experiments>
</comment>
<comment type="interaction">
    <interactant intactId="EBI-11984663">
        <id>Q06455-2</id>
    </interactant>
    <interactant intactId="EBI-2799833">
        <id>Q8N1B4</id>
        <label>VPS52</label>
    </interactant>
    <organismsDiffer>false</organismsDiffer>
    <experiments>3</experiments>
</comment>
<comment type="interaction">
    <interactant intactId="EBI-11984663">
        <id>Q06455-2</id>
    </interactant>
    <interactant intactId="EBI-714455">
        <id>Q9Y2W2</id>
        <label>WBP11</label>
    </interactant>
    <organismsDiffer>false</organismsDiffer>
    <experiments>3</experiments>
</comment>
<comment type="interaction">
    <interactant intactId="EBI-11984663">
        <id>Q06455-2</id>
    </interactant>
    <interactant intactId="EBI-517127">
        <id>P98170</id>
        <label>XIAP</label>
    </interactant>
    <organismsDiffer>false</organismsDiffer>
    <experiments>3</experiments>
</comment>
<comment type="interaction">
    <interactant intactId="EBI-11984663">
        <id>Q06455-2</id>
    </interactant>
    <interactant intactId="EBI-374248">
        <id>P26651</id>
        <label>ZFP36</label>
    </interactant>
    <organismsDiffer>false</organismsDiffer>
    <experiments>3</experiments>
</comment>
<comment type="interaction">
    <interactant intactId="EBI-11984663">
        <id>Q06455-2</id>
    </interactant>
    <interactant intactId="EBI-11419867">
        <id>Q8TF47</id>
        <label>ZFP90</label>
    </interactant>
    <organismsDiffer>false</organismsDiffer>
    <experiments>3</experiments>
</comment>
<comment type="interaction">
    <interactant intactId="EBI-11984663">
        <id>Q06455-2</id>
    </interactant>
    <interactant intactId="EBI-10252492">
        <id>Q6P1L6</id>
        <label>ZNF343</label>
    </interactant>
    <organismsDiffer>false</organismsDiffer>
    <experiments>3</experiments>
</comment>
<comment type="interaction">
    <interactant intactId="EBI-11984663">
        <id>Q06455-2</id>
    </interactant>
    <interactant intactId="EBI-625509">
        <id>Q8N720</id>
        <label>ZNF655</label>
    </interactant>
    <organismsDiffer>false</organismsDiffer>
    <experiments>3</experiments>
</comment>
<comment type="interaction">
    <interactant intactId="EBI-11984663">
        <id>Q06455-2</id>
    </interactant>
    <interactant intactId="EBI-9088990">
        <id>Q7Z783</id>
    </interactant>
    <organismsDiffer>false</organismsDiffer>
    <experiments>3</experiments>
</comment>
<comment type="interaction">
    <interactant intactId="EBI-10224192">
        <id>Q06455-4</id>
    </interactant>
    <interactant intactId="EBI-742038">
        <id>Q9P2A4</id>
        <label>ABI3</label>
    </interactant>
    <organismsDiffer>false</organismsDiffer>
    <experiments>3</experiments>
</comment>
<comment type="interaction">
    <interactant intactId="EBI-10224192">
        <id>Q06455-4</id>
    </interactant>
    <interactant intactId="EBI-741210">
        <id>Q0VDD7</id>
        <label>BRME1</label>
    </interactant>
    <organismsDiffer>false</organismsDiffer>
    <experiments>3</experiments>
</comment>
<comment type="interaction">
    <interactant intactId="EBI-10224192">
        <id>Q06455-4</id>
    </interactant>
    <interactant intactId="EBI-741724">
        <id>Q8NA61</id>
        <label>CBY2</label>
    </interactant>
    <organismsDiffer>false</organismsDiffer>
    <experiments>3</experiments>
</comment>
<comment type="interaction">
    <interactant intactId="EBI-10224192">
        <id>Q06455-4</id>
    </interactant>
    <interactant intactId="EBI-746909">
        <id>Q8N684</id>
        <label>CPSF7</label>
    </interactant>
    <organismsDiffer>false</organismsDiffer>
    <experiments>3</experiments>
</comment>
<comment type="interaction">
    <interactant intactId="EBI-10224192">
        <id>Q06455-4</id>
    </interactant>
    <interactant intactId="EBI-6942903">
        <id>Q96BA8</id>
        <label>CREB3L1</label>
    </interactant>
    <organismsDiffer>false</organismsDiffer>
    <experiments>3</experiments>
</comment>
<comment type="interaction">
    <interactant intactId="EBI-10224192">
        <id>Q06455-4</id>
    </interactant>
    <interactant intactId="EBI-2349927">
        <id>Q5JST6</id>
        <label>EFHC2</label>
    </interactant>
    <organismsDiffer>false</organismsDiffer>
    <experiments>3</experiments>
</comment>
<comment type="interaction">
    <interactant intactId="EBI-10224192">
        <id>Q06455-4</id>
    </interactant>
    <interactant intactId="EBI-375576">
        <id>Q12929</id>
        <label>EPS8</label>
    </interactant>
    <organismsDiffer>false</organismsDiffer>
    <experiments>3</experiments>
</comment>
<comment type="interaction">
    <interactant intactId="EBI-10224192">
        <id>Q06455-4</id>
    </interactant>
    <interactant intactId="EBI-372619">
        <id>Q14687</id>
        <label>GSE1</label>
    </interactant>
    <organismsDiffer>false</organismsDiffer>
    <experiments>3</experiments>
</comment>
<comment type="interaction">
    <interactant intactId="EBI-10224192">
        <id>Q06455-4</id>
    </interactant>
    <interactant intactId="EBI-748420">
        <id>Q9NSC5</id>
        <label>HOMER3</label>
    </interactant>
    <organismsDiffer>false</organismsDiffer>
    <experiments>3</experiments>
</comment>
<comment type="interaction">
    <interactant intactId="EBI-10224192">
        <id>Q06455-4</id>
    </interactant>
    <interactant intactId="EBI-8638439">
        <id>Q8IYA8</id>
        <label>IHO1</label>
    </interactant>
    <organismsDiffer>false</organismsDiffer>
    <experiments>3</experiments>
</comment>
<comment type="interaction">
    <interactant intactId="EBI-10224192">
        <id>Q06455-4</id>
    </interactant>
    <interactant intactId="EBI-744222">
        <id>O60711</id>
        <label>LPXN</label>
    </interactant>
    <organismsDiffer>false</organismsDiffer>
    <experiments>3</experiments>
</comment>
<comment type="interaction">
    <interactant intactId="EBI-10224192">
        <id>Q06455-4</id>
    </interactant>
    <interactant intactId="EBI-741037">
        <id>Q9BRK4</id>
        <label>LZTS2</label>
    </interactant>
    <organismsDiffer>false</organismsDiffer>
    <experiments>3</experiments>
</comment>
<comment type="interaction">
    <interactant intactId="EBI-10224192">
        <id>Q06455-4</id>
    </interactant>
    <interactant intactId="EBI-748397">
        <id>P50222</id>
        <label>MEOX2</label>
    </interactant>
    <organismsDiffer>false</organismsDiffer>
    <experiments>3</experiments>
</comment>
<comment type="interaction">
    <interactant intactId="EBI-10224192">
        <id>Q06455-4</id>
    </interactant>
    <interactant intactId="EBI-10172526">
        <id>Q9UJV3-2</id>
        <label>MID2</label>
    </interactant>
    <organismsDiffer>false</organismsDiffer>
    <experiments>3</experiments>
</comment>
<comment type="interaction">
    <interactant intactId="EBI-10224192">
        <id>Q06455-4</id>
    </interactant>
    <interactant intactId="EBI-10172876">
        <id>Q7Z6G3-2</id>
        <label>NECAB2</label>
    </interactant>
    <organismsDiffer>false</organismsDiffer>
    <experiments>3</experiments>
</comment>
<comment type="interaction">
    <interactant intactId="EBI-10224192">
        <id>Q06455-4</id>
    </interactant>
    <interactant intactId="EBI-3957793">
        <id>Q9GZV8</id>
        <label>PRDM14</label>
    </interactant>
    <organismsDiffer>false</organismsDiffer>
    <experiments>3</experiments>
</comment>
<comment type="interaction">
    <interactant intactId="EBI-10224192">
        <id>Q06455-4</id>
    </interactant>
    <interactant intactId="EBI-742487">
        <id>O43597</id>
        <label>SPRY2</label>
    </interactant>
    <organismsDiffer>false</organismsDiffer>
    <experiments>3</experiments>
</comment>
<comment type="interaction">
    <interactant intactId="EBI-10224192">
        <id>Q06455-4</id>
    </interactant>
    <interactant intactId="EBI-714135">
        <id>O75558</id>
        <label>STX11</label>
    </interactant>
    <organismsDiffer>false</organismsDiffer>
    <experiments>3</experiments>
</comment>
<comment type="interaction">
    <interactant intactId="EBI-10224192">
        <id>Q06455-4</id>
    </interactant>
    <interactant intactId="EBI-11952764">
        <id>Q99081-3</id>
        <label>TCF12</label>
    </interactant>
    <organismsDiffer>false</organismsDiffer>
    <experiments>2</experiments>
</comment>
<comment type="interaction">
    <interactant intactId="EBI-10224192">
        <id>Q06455-4</id>
    </interactant>
    <interactant intactId="EBI-5235829">
        <id>Q8IWZ5</id>
        <label>TRIM42</label>
    </interactant>
    <organismsDiffer>false</organismsDiffer>
    <experiments>3</experiments>
</comment>
<comment type="interaction">
    <interactant intactId="EBI-10224192">
        <id>Q06455-4</id>
    </interactant>
    <interactant intactId="EBI-2514659">
        <id>Q5VZL5</id>
        <label>ZMYM4</label>
    </interactant>
    <organismsDiffer>false</organismsDiffer>
    <experiments>3</experiments>
</comment>
<comment type="subcellular location">
    <subcellularLocation>
        <location evidence="3 6">Nucleus</location>
    </subcellularLocation>
    <text>Colocalizes with ATN1 in discrete nuclear dots.</text>
</comment>
<comment type="alternative products">
    <event type="alternative splicing"/>
    <isoform>
        <id>Q06455-1</id>
        <name>MTG8B</name>
        <sequence type="displayed"/>
    </isoform>
    <isoform>
        <id>Q06455-2</id>
        <name>MTG8A</name>
        <sequence type="described" ref="VSP_003327"/>
    </isoform>
    <isoform>
        <id>Q06455-3</id>
        <name>3</name>
        <sequence type="described" ref="VSP_044558"/>
    </isoform>
    <isoform>
        <id>Q06455-4</id>
        <name>4</name>
        <sequence type="described" ref="VSP_045442"/>
    </isoform>
    <isoform>
        <id>Q06455-5</id>
        <name>MTG8B-2</name>
        <sequence type="described" ref="VSP_058512 VSP_058513"/>
    </isoform>
    <isoform>
        <id>Q06455-6</id>
        <name>MTG8A-2</name>
        <sequence type="described" ref="VSP_003327 VSP_058512 VSP_058513"/>
    </isoform>
</comment>
<comment type="tissue specificity">
    <text>Most abundantly expressed in brain. Lower levels in lung, heart, testis and ovary.</text>
</comment>
<comment type="domain">
    <text evidence="13">The TAFH domain mediates interaction with transcription regulators.</text>
</comment>
<comment type="domain">
    <text evidence="9">Nervy homology region 2 (NHR2) mediates homo- and possibly heterotypic oligomerization by forming a four-helix bundle tetrameric structure.</text>
</comment>
<comment type="disease">
    <text evidence="8 17 18 19">A chromosomal aberration involving RUNX1T1 is frequently found in acute myeloid leukemia with maturation (AML-M2). Translocation t(8;21)(q22;q22) with RUNX1/AML1 that results in the production of AML1-MTG8/ETO fusion protein.</text>
</comment>
<comment type="similarity">
    <text evidence="27">Belongs to the CBFA2T family.</text>
</comment>
<comment type="sequence caution" evidence="27">
    <conflict type="erroneous initiation">
        <sequence resource="EMBL-CDS" id="AAH05850"/>
    </conflict>
    <text>Truncated N-terminus.</text>
</comment>
<comment type="sequence caution" evidence="27">
    <conflict type="erroneous initiation">
        <sequence resource="EMBL-CDS" id="BAA03247"/>
    </conflict>
    <text>Truncated N-terminus.</text>
</comment>
<comment type="online information" name="Atlas of Genetics and Cytogenetics in Oncology and Haematology">
    <link uri="https://atlasgeneticsoncology.org/gene/26/ETO"/>
</comment>
<sequence>MISVKRNTWRALSLVIGDCRKKGNFEYCQDRTEKHSTMPDSPVDVKTQSRLTPPTMPPPPTTQGAPRTSSFTPTTLTNGTSHSPTALNGAPSPPNGFSNGPSSSSSSSLANQQLPPACGARQLSKLKRFLTTLQQFGNDISPEIGERVRTLVLGLVNSTLTIEEFHSKLQEATNFPLRPFVIPFLKANLPLLQRELLHCARLAKQNPAQYLAQHEQLLLDASTTSPVDSSELLLDVNENGKRRTPDRTKENGFDREPLHSEHPSKRPCTISPGQRYSPNNGLSYQPNGLPHPTPPPPQHYRLDDMAIAHHYRDSYRHPSHRDLRDRNRPMGLHGTRQEEMIDHRLTDREWAEEWKHLDHLLNCIMDMVEKTRRSLTVLRRCQEADREELNYWIRRYSDAEDLKKGGGSSSSHSRQQSPVNPDPVALDAHREFLHRPASGYVPEEIWKKAEEAVNEVKRQAMTELQKAVSEAERKAHDMITTERAKMERTVAEAKRQAAEDALAVINQQEDSSESCWNCGRKASETCSGCNTARYCGSFCQHKDWEKHHHICGQTLQAQQQGDTPAVSSSVTPNSGAGSPMDTPPAATPRSTTPGTPSTIETTPR</sequence>
<organism>
    <name type="scientific">Homo sapiens</name>
    <name type="common">Human</name>
    <dbReference type="NCBI Taxonomy" id="9606"/>
    <lineage>
        <taxon>Eukaryota</taxon>
        <taxon>Metazoa</taxon>
        <taxon>Chordata</taxon>
        <taxon>Craniata</taxon>
        <taxon>Vertebrata</taxon>
        <taxon>Euteleostomi</taxon>
        <taxon>Mammalia</taxon>
        <taxon>Eutheria</taxon>
        <taxon>Euarchontoglires</taxon>
        <taxon>Primates</taxon>
        <taxon>Haplorrhini</taxon>
        <taxon>Catarrhini</taxon>
        <taxon>Hominidae</taxon>
        <taxon>Homo</taxon>
    </lineage>
</organism>
<keyword id="KW-0002">3D-structure</keyword>
<keyword id="KW-0025">Alternative splicing</keyword>
<keyword id="KW-0160">Chromosomal rearrangement</keyword>
<keyword id="KW-0238">DNA-binding</keyword>
<keyword id="KW-0479">Metal-binding</keyword>
<keyword id="KW-0539">Nucleus</keyword>
<keyword id="KW-0597">Phosphoprotein</keyword>
<keyword id="KW-1267">Proteomics identification</keyword>
<keyword id="KW-0656">Proto-oncogene</keyword>
<keyword id="KW-1185">Reference proteome</keyword>
<keyword id="KW-0678">Repressor</keyword>
<keyword id="KW-0804">Transcription</keyword>
<keyword id="KW-0805">Transcription regulation</keyword>
<keyword id="KW-0862">Zinc</keyword>
<keyword id="KW-0863">Zinc-finger</keyword>
<name>MTG8_HUMAN</name>
<reference key="1">
    <citation type="journal article" date="1993" name="EMBO J.">
        <title>The t(8;21) translocation in acute myeloid leukemia results in production of an AML1-MTG8 fusion transcript.</title>
        <authorList>
            <person name="Miyoshi H."/>
            <person name="Kozu T."/>
            <person name="Shimizu K."/>
            <person name="Enomoto K."/>
            <person name="Maseki N."/>
            <person name="Kaneko Y."/>
            <person name="Kamada N."/>
            <person name="Ohki M."/>
        </authorList>
    </citation>
    <scope>NUCLEOTIDE SEQUENCE [MRNA] (ISOFORM MTG8B)</scope>
    <scope>CHROMOSOMAL TRANSLOCATION</scope>
    <scope>INVOLVEMENT IN AML-M2</scope>
    <source>
        <tissue>Fetal brain</tissue>
    </source>
</reference>
<reference key="2">
    <citation type="journal article" date="1998" name="Gene">
        <title>Structure and expression of the human MTG8/ETO gene.</title>
        <authorList>
            <person name="Wolford J.K."/>
            <person name="Prochazka M."/>
        </authorList>
    </citation>
    <scope>NUCLEOTIDE SEQUENCE [GENOMIC DNA / MRNA] (ISOFORM MTG8B)</scope>
    <scope>ALTERNATIVE SPLICING (ISOFORMS MTG8A-2 AND MTG8B-2)</scope>
</reference>
<reference key="3">
    <citation type="journal article" date="2004" name="Nat. Genet.">
        <title>Complete sequencing and characterization of 21,243 full-length human cDNAs.</title>
        <authorList>
            <person name="Ota T."/>
            <person name="Suzuki Y."/>
            <person name="Nishikawa T."/>
            <person name="Otsuki T."/>
            <person name="Sugiyama T."/>
            <person name="Irie R."/>
            <person name="Wakamatsu A."/>
            <person name="Hayashi K."/>
            <person name="Sato H."/>
            <person name="Nagai K."/>
            <person name="Kimura K."/>
            <person name="Makita H."/>
            <person name="Sekine M."/>
            <person name="Obayashi M."/>
            <person name="Nishi T."/>
            <person name="Shibahara T."/>
            <person name="Tanaka T."/>
            <person name="Ishii S."/>
            <person name="Yamamoto J."/>
            <person name="Saito K."/>
            <person name="Kawai Y."/>
            <person name="Isono Y."/>
            <person name="Nakamura Y."/>
            <person name="Nagahari K."/>
            <person name="Murakami K."/>
            <person name="Yasuda T."/>
            <person name="Iwayanagi T."/>
            <person name="Wagatsuma M."/>
            <person name="Shiratori A."/>
            <person name="Sudo H."/>
            <person name="Hosoiri T."/>
            <person name="Kaku Y."/>
            <person name="Kodaira H."/>
            <person name="Kondo H."/>
            <person name="Sugawara M."/>
            <person name="Takahashi M."/>
            <person name="Kanda K."/>
            <person name="Yokoi T."/>
            <person name="Furuya T."/>
            <person name="Kikkawa E."/>
            <person name="Omura Y."/>
            <person name="Abe K."/>
            <person name="Kamihara K."/>
            <person name="Katsuta N."/>
            <person name="Sato K."/>
            <person name="Tanikawa M."/>
            <person name="Yamazaki M."/>
            <person name="Ninomiya K."/>
            <person name="Ishibashi T."/>
            <person name="Yamashita H."/>
            <person name="Murakawa K."/>
            <person name="Fujimori K."/>
            <person name="Tanai H."/>
            <person name="Kimata M."/>
            <person name="Watanabe M."/>
            <person name="Hiraoka S."/>
            <person name="Chiba Y."/>
            <person name="Ishida S."/>
            <person name="Ono Y."/>
            <person name="Takiguchi S."/>
            <person name="Watanabe S."/>
            <person name="Yosida M."/>
            <person name="Hotuta T."/>
            <person name="Kusano J."/>
            <person name="Kanehori K."/>
            <person name="Takahashi-Fujii A."/>
            <person name="Hara H."/>
            <person name="Tanase T.-O."/>
            <person name="Nomura Y."/>
            <person name="Togiya S."/>
            <person name="Komai F."/>
            <person name="Hara R."/>
            <person name="Takeuchi K."/>
            <person name="Arita M."/>
            <person name="Imose N."/>
            <person name="Musashino K."/>
            <person name="Yuuki H."/>
            <person name="Oshima A."/>
            <person name="Sasaki N."/>
            <person name="Aotsuka S."/>
            <person name="Yoshikawa Y."/>
            <person name="Matsunawa H."/>
            <person name="Ichihara T."/>
            <person name="Shiohata N."/>
            <person name="Sano S."/>
            <person name="Moriya S."/>
            <person name="Momiyama H."/>
            <person name="Satoh N."/>
            <person name="Takami S."/>
            <person name="Terashima Y."/>
            <person name="Suzuki O."/>
            <person name="Nakagawa S."/>
            <person name="Senoh A."/>
            <person name="Mizoguchi H."/>
            <person name="Goto Y."/>
            <person name="Shimizu F."/>
            <person name="Wakebe H."/>
            <person name="Hishigaki H."/>
            <person name="Watanabe T."/>
            <person name="Sugiyama A."/>
            <person name="Takemoto M."/>
            <person name="Kawakami B."/>
            <person name="Yamazaki M."/>
            <person name="Watanabe K."/>
            <person name="Kumagai A."/>
            <person name="Itakura S."/>
            <person name="Fukuzumi Y."/>
            <person name="Fujimori Y."/>
            <person name="Komiyama M."/>
            <person name="Tashiro H."/>
            <person name="Tanigami A."/>
            <person name="Fujiwara T."/>
            <person name="Ono T."/>
            <person name="Yamada K."/>
            <person name="Fujii Y."/>
            <person name="Ozaki K."/>
            <person name="Hirao M."/>
            <person name="Ohmori Y."/>
            <person name="Kawabata A."/>
            <person name="Hikiji T."/>
            <person name="Kobatake N."/>
            <person name="Inagaki H."/>
            <person name="Ikema Y."/>
            <person name="Okamoto S."/>
            <person name="Okitani R."/>
            <person name="Kawakami T."/>
            <person name="Noguchi S."/>
            <person name="Itoh T."/>
            <person name="Shigeta K."/>
            <person name="Senba T."/>
            <person name="Matsumura K."/>
            <person name="Nakajima Y."/>
            <person name="Mizuno T."/>
            <person name="Morinaga M."/>
            <person name="Sasaki M."/>
            <person name="Togashi T."/>
            <person name="Oyama M."/>
            <person name="Hata H."/>
            <person name="Watanabe M."/>
            <person name="Komatsu T."/>
            <person name="Mizushima-Sugano J."/>
            <person name="Satoh T."/>
            <person name="Shirai Y."/>
            <person name="Takahashi Y."/>
            <person name="Nakagawa K."/>
            <person name="Okumura K."/>
            <person name="Nagase T."/>
            <person name="Nomura N."/>
            <person name="Kikuchi H."/>
            <person name="Masuho Y."/>
            <person name="Yamashita R."/>
            <person name="Nakai K."/>
            <person name="Yada T."/>
            <person name="Nakamura Y."/>
            <person name="Ohara O."/>
            <person name="Isogai T."/>
            <person name="Sugano S."/>
        </authorList>
    </citation>
    <scope>NUCLEOTIDE SEQUENCE [LARGE SCALE MRNA] (ISOFORM 3)</scope>
    <source>
        <tissue>Brain</tissue>
    </source>
</reference>
<reference key="4">
    <citation type="submission" date="2003-08" db="EMBL/GenBank/DDBJ databases">
        <title>Cloning of human full-length CDSs in BD Creator(TM) system donor vector.</title>
        <authorList>
            <person name="Kalnine N."/>
            <person name="Chen X."/>
            <person name="Rolfs A."/>
            <person name="Halleck A."/>
            <person name="Hines L."/>
            <person name="Eisenstein S."/>
            <person name="Koundinya M."/>
            <person name="Raphael J."/>
            <person name="Moreira D."/>
            <person name="Kelley T."/>
            <person name="LaBaer J."/>
            <person name="Lin Y."/>
            <person name="Phelan M."/>
            <person name="Farmer A."/>
        </authorList>
    </citation>
    <scope>NUCLEOTIDE SEQUENCE [LARGE SCALE MRNA] (ISOFORM 4)</scope>
</reference>
<reference key="5">
    <citation type="submission" date="2004-06" db="EMBL/GenBank/DDBJ databases">
        <title>Cloning of human full open reading frames in Gateway(TM) system entry vector (pDONR201).</title>
        <authorList>
            <person name="Ebert L."/>
            <person name="Schick M."/>
            <person name="Neubert P."/>
            <person name="Schatten R."/>
            <person name="Henze S."/>
            <person name="Korn B."/>
        </authorList>
    </citation>
    <scope>NUCLEOTIDE SEQUENCE [LARGE SCALE MRNA] (ISOFORM MTG8A)</scope>
</reference>
<reference key="6">
    <citation type="journal article" date="2006" name="Nature">
        <title>DNA sequence and analysis of human chromosome 8.</title>
        <authorList>
            <person name="Nusbaum C."/>
            <person name="Mikkelsen T.S."/>
            <person name="Zody M.C."/>
            <person name="Asakawa S."/>
            <person name="Taudien S."/>
            <person name="Garber M."/>
            <person name="Kodira C.D."/>
            <person name="Schueler M.G."/>
            <person name="Shimizu A."/>
            <person name="Whittaker C.A."/>
            <person name="Chang J.L."/>
            <person name="Cuomo C.A."/>
            <person name="Dewar K."/>
            <person name="FitzGerald M.G."/>
            <person name="Yang X."/>
            <person name="Allen N.R."/>
            <person name="Anderson S."/>
            <person name="Asakawa T."/>
            <person name="Blechschmidt K."/>
            <person name="Bloom T."/>
            <person name="Borowsky M.L."/>
            <person name="Butler J."/>
            <person name="Cook A."/>
            <person name="Corum B."/>
            <person name="DeArellano K."/>
            <person name="DeCaprio D."/>
            <person name="Dooley K.T."/>
            <person name="Dorris L. III"/>
            <person name="Engels R."/>
            <person name="Gloeckner G."/>
            <person name="Hafez N."/>
            <person name="Hagopian D.S."/>
            <person name="Hall J.L."/>
            <person name="Ishikawa S.K."/>
            <person name="Jaffe D.B."/>
            <person name="Kamat A."/>
            <person name="Kudoh J."/>
            <person name="Lehmann R."/>
            <person name="Lokitsang T."/>
            <person name="Macdonald P."/>
            <person name="Major J.E."/>
            <person name="Matthews C.D."/>
            <person name="Mauceli E."/>
            <person name="Menzel U."/>
            <person name="Mihalev A.H."/>
            <person name="Minoshima S."/>
            <person name="Murayama Y."/>
            <person name="Naylor J.W."/>
            <person name="Nicol R."/>
            <person name="Nguyen C."/>
            <person name="O'Leary S.B."/>
            <person name="O'Neill K."/>
            <person name="Parker S.C.J."/>
            <person name="Polley A."/>
            <person name="Raymond C.K."/>
            <person name="Reichwald K."/>
            <person name="Rodriguez J."/>
            <person name="Sasaki T."/>
            <person name="Schilhabel M."/>
            <person name="Siddiqui R."/>
            <person name="Smith C.L."/>
            <person name="Sneddon T.P."/>
            <person name="Talamas J.A."/>
            <person name="Tenzin P."/>
            <person name="Topham K."/>
            <person name="Venkataraman V."/>
            <person name="Wen G."/>
            <person name="Yamazaki S."/>
            <person name="Young S.K."/>
            <person name="Zeng Q."/>
            <person name="Zimmer A.R."/>
            <person name="Rosenthal A."/>
            <person name="Birren B.W."/>
            <person name="Platzer M."/>
            <person name="Shimizu N."/>
            <person name="Lander E.S."/>
        </authorList>
    </citation>
    <scope>NUCLEOTIDE SEQUENCE [LARGE SCALE GENOMIC DNA]</scope>
</reference>
<reference key="7">
    <citation type="submission" date="2005-07" db="EMBL/GenBank/DDBJ databases">
        <authorList>
            <person name="Mural R.J."/>
            <person name="Istrail S."/>
            <person name="Sutton G.G."/>
            <person name="Florea L."/>
            <person name="Halpern A.L."/>
            <person name="Mobarry C.M."/>
            <person name="Lippert R."/>
            <person name="Walenz B."/>
            <person name="Shatkay H."/>
            <person name="Dew I."/>
            <person name="Miller J.R."/>
            <person name="Flanigan M.J."/>
            <person name="Edwards N.J."/>
            <person name="Bolanos R."/>
            <person name="Fasulo D."/>
            <person name="Halldorsson B.V."/>
            <person name="Hannenhalli S."/>
            <person name="Turner R."/>
            <person name="Yooseph S."/>
            <person name="Lu F."/>
            <person name="Nusskern D.R."/>
            <person name="Shue B.C."/>
            <person name="Zheng X.H."/>
            <person name="Zhong F."/>
            <person name="Delcher A.L."/>
            <person name="Huson D.H."/>
            <person name="Kravitz S.A."/>
            <person name="Mouchard L."/>
            <person name="Reinert K."/>
            <person name="Remington K.A."/>
            <person name="Clark A.G."/>
            <person name="Waterman M.S."/>
            <person name="Eichler E.E."/>
            <person name="Adams M.D."/>
            <person name="Hunkapiller M.W."/>
            <person name="Myers E.W."/>
            <person name="Venter J.C."/>
        </authorList>
    </citation>
    <scope>NUCLEOTIDE SEQUENCE [LARGE SCALE GENOMIC DNA]</scope>
</reference>
<reference key="8">
    <citation type="journal article" date="2004" name="Genome Res.">
        <title>The status, quality, and expansion of the NIH full-length cDNA project: the Mammalian Gene Collection (MGC).</title>
        <authorList>
            <consortium name="The MGC Project Team"/>
        </authorList>
    </citation>
    <scope>NUCLEOTIDE SEQUENCE [LARGE SCALE MRNA] (ISOFORM 4)</scope>
    <source>
        <tissue>Muscle</tissue>
    </source>
</reference>
<reference key="9">
    <citation type="journal article" date="1994" name="Cancer Res.">
        <title>The ETO portion of acute myeloid leukemia t(8;21) fusion transcript encodes a highly evolutionarily conserved putative transcription factor.</title>
        <authorList>
            <person name="Erickson P.F."/>
            <person name="Robinson M."/>
            <person name="Owens G."/>
            <person name="Drabkin H.A."/>
        </authorList>
    </citation>
    <scope>NUCLEOTIDE SEQUENCE [MRNA] OF 31-604</scope>
</reference>
<reference key="10">
    <citation type="journal article" date="1994" name="Blood">
        <title>Alternative, out-of-frame runt/MTG8 transcripts are encoded by the derivative (8) chromosome in the t(8;21) of acute myeloid leukemia M2.</title>
        <authorList>
            <person name="Tighe J.E."/>
            <person name="Calabi F."/>
        </authorList>
    </citation>
    <scope>NUCLEOTIDE SEQUENCE [GENOMIC DNA] OF 334-432</scope>
    <scope>CHROMOSOMAL TRANSLOCATION</scope>
    <scope>INVOLVEMENT IN AML-M2</scope>
</reference>
<reference key="11">
    <citation type="journal article" date="2000" name="J. Cell Biol.">
        <title>Atrophin-1, the dentato-rubral and pallido-luysian atrophy gene product, interacts with ETO/MTG8 in the nuclear matrix and represses transcription.</title>
        <authorList>
            <person name="Wood J.D."/>
            <person name="Nucifora F.C. Jr."/>
            <person name="Duan K."/>
            <person name="Zhang C."/>
            <person name="Wang J."/>
            <person name="Kim Y."/>
            <person name="Schilling G."/>
            <person name="Sacchi N."/>
            <person name="Liu J.M."/>
            <person name="Ross C.A."/>
        </authorList>
    </citation>
    <scope>INTERACTION WITH ATN1</scope>
    <scope>SUBCELLULAR LOCATION</scope>
    <scope>FUNCTION</scope>
</reference>
<reference key="12">
    <citation type="journal article" date="2000" name="Mol. Cell. Biol.">
        <title>The ETO protein disrupted in t(8;21)-associated acute myeloid leukemia is a corepressor for the promyelocytic leukemia zinc finger protein.</title>
        <authorList>
            <person name="Melnick A.M."/>
            <person name="Westendorf J.J."/>
            <person name="Polinger A."/>
            <person name="Carlile G.W."/>
            <person name="Arai S."/>
            <person name="Ball H.J."/>
            <person name="Lutterbach B."/>
            <person name="Hiebert S.W."/>
            <person name="Licht J.D."/>
        </authorList>
    </citation>
    <scope>FUNCTION</scope>
    <scope>INTERACTION WITH ZBTB16</scope>
</reference>
<reference key="13">
    <citation type="journal article" date="2002" name="Oncogene">
        <title>The transcriptional corepressor MTG16a contains a novel nucleolar targeting sequence deranged in t(16; 21)-positive myeloid malignancies.</title>
        <authorList>
            <person name="Hoogeveen A.T."/>
            <person name="Rossetti S."/>
            <person name="Stoyanova V."/>
            <person name="Schonkeren J."/>
            <person name="Fenaroli A."/>
            <person name="Schiaffonati L."/>
            <person name="van Unen L."/>
            <person name="Sacchi N."/>
        </authorList>
    </citation>
    <scope>INTERACTION WITH CBFA2T3</scope>
</reference>
<reference key="14">
    <citation type="journal article" date="2003" name="Gene">
        <title>The ETO (MTG8) gene family.</title>
        <authorList>
            <person name="Davis J.N."/>
            <person name="McGhee L."/>
            <person name="Meyers S."/>
        </authorList>
    </citation>
    <scope>REVIEW</scope>
</reference>
<reference key="15">
    <citation type="journal article" date="2004" name="Genomics">
        <title>The MTG proteins: chromatin repression players with a passion for networking.</title>
        <authorList>
            <person name="Rossetti S."/>
            <person name="Hoogeveen A.T."/>
            <person name="Sacchi N."/>
        </authorList>
    </citation>
    <scope>REVIEW</scope>
</reference>
<reference key="16">
    <citation type="journal article" date="2009" name="Anal. Chem.">
        <title>Lys-N and trypsin cover complementary parts of the phosphoproteome in a refined SCX-based approach.</title>
        <authorList>
            <person name="Gauci S."/>
            <person name="Helbig A.O."/>
            <person name="Slijper M."/>
            <person name="Krijgsveld J."/>
            <person name="Heck A.J."/>
            <person name="Mohammed S."/>
        </authorList>
    </citation>
    <scope>IDENTIFICATION BY MASS SPECTROMETRY [LARGE SCALE ANALYSIS]</scope>
</reference>
<reference key="17">
    <citation type="journal article" date="2009" name="Proc. Natl. Acad. Sci. U.S.A.">
        <title>Transforming activity of AML1-ETO is independent of CBFbeta and ETO interaction but requires formation of homo-oligomeric complexes.</title>
        <authorList>
            <person name="Kwok C."/>
            <person name="Zeisig B.B."/>
            <person name="Qiu J."/>
            <person name="Dong S."/>
            <person name="So C.W."/>
        </authorList>
    </citation>
    <scope>SUBUNIT</scope>
</reference>
<reference key="18">
    <citation type="journal article" date="2011" name="Sci. Signal.">
        <title>System-wide temporal characterization of the proteome and phosphoproteome of human embryonic stem cell differentiation.</title>
        <authorList>
            <person name="Rigbolt K.T."/>
            <person name="Prokhorova T.A."/>
            <person name="Akimov V."/>
            <person name="Henningsen J."/>
            <person name="Johansen P.T."/>
            <person name="Kratchmarova I."/>
            <person name="Kassem M."/>
            <person name="Mann M."/>
            <person name="Olsen J.V."/>
            <person name="Blagoev B."/>
        </authorList>
    </citation>
    <scope>PHOSPHORYLATION [LARGE SCALE ANALYSIS] AT SER-41 AND SER-417</scope>
    <scope>IDENTIFICATION BY MASS SPECTROMETRY [LARGE SCALE ANALYSIS]</scope>
</reference>
<reference key="19">
    <citation type="journal article" date="2012" name="PLoS ONE">
        <title>Kaiso directs the transcriptional corepressor MTG16 to the Kaiso binding site in target promoters.</title>
        <authorList>
            <person name="Barrett C.W."/>
            <person name="Smith J.J."/>
            <person name="Lu L.C."/>
            <person name="Markham N."/>
            <person name="Stengel K.R."/>
            <person name="Short S.P."/>
            <person name="Zhang B."/>
            <person name="Hunt A.A."/>
            <person name="Fingleton B.M."/>
            <person name="Carnahan R.H."/>
            <person name="Engel M.E."/>
            <person name="Chen X."/>
            <person name="Beauchamp R.D."/>
            <person name="Wilson K.T."/>
            <person name="Hiebert S.W."/>
            <person name="Reynolds A.B."/>
            <person name="Williams C.S."/>
        </authorList>
    </citation>
    <scope>FUNCTION</scope>
</reference>
<reference key="20">
    <citation type="journal article" date="2006" name="Cancer Cell">
        <title>The tetramer structure of the Nervy homology two domain, NHR2, is critical for AML1/ETO's activity.</title>
        <authorList>
            <person name="Liu Y."/>
            <person name="Cheney M.D."/>
            <person name="Gaudet J.J."/>
            <person name="Chruszcz M."/>
            <person name="Lukasik S.M."/>
            <person name="Sugiyama D."/>
            <person name="Lary J."/>
            <person name="Cole J."/>
            <person name="Dauter Z."/>
            <person name="Minor W."/>
            <person name="Speck N.A."/>
            <person name="Bushweller J.H."/>
        </authorList>
    </citation>
    <scope>X-RAY CRYSTALLOGRAPHY (2.0 ANGSTROMS) OF 335-403</scope>
    <scope>SUBUNIT</scope>
    <scope>NRH2 DOMAIN</scope>
    <scope>INTERACTION WITH HDAC1; HDAC2; HDAC3; TCF12; NCOR1; NCOR2; SIN3A; CBFA2T2 AND CBFA2T3</scope>
    <scope>MUTAGENESIS OF LEU-345; LEU-357; LEU-360; LEU-361; LEU-375; LEU-378 AND LEU-389</scope>
</reference>
<reference key="21">
    <citation type="journal article" date="2006" name="Proc. Natl. Acad. Sci. U.S.A.">
        <title>The acute myeloid leukemia fusion protein AML1-ETO targets E proteins via a paired amphipathic helix-like TBP-associated factor homology domain.</title>
        <authorList>
            <person name="Plevin M.J."/>
            <person name="Zhang J."/>
            <person name="Guo C."/>
            <person name="Roeder R.G."/>
            <person name="Ikura M."/>
        </authorList>
    </citation>
    <scope>STRUCTURE BY NMR OF 120-222</scope>
    <scope>INTERACTION WITH TCF12</scope>
    <scope>FUNCTION</scope>
    <scope>MUTAGENESIS OF LYS-125; LEU-126; ARG-128; PHE-129; ARG-178 AND PHE-184</scope>
</reference>
<reference key="22">
    <citation type="journal article" date="2007" name="Cancer Cell">
        <title>Structural basis for recognition of SMRT/N-CoR by the MYND domain and its contribution to AML1/ETO's activity.</title>
        <authorList>
            <person name="Liu Y."/>
            <person name="Chen W."/>
            <person name="Gaudet J."/>
            <person name="Cheney M.D."/>
            <person name="Roudaia L."/>
            <person name="Cierpicki T."/>
            <person name="Klet R.C."/>
            <person name="Hartman K."/>
            <person name="Laue T.M."/>
            <person name="Speck N.A."/>
            <person name="Bushweller J.H."/>
        </authorList>
    </citation>
    <scope>STRUCTURE BY NMR OF 510-559 IN COMPLEX WITH ZINC IONS AND NCOR2</scope>
    <scope>MUTAGENESIS OF HIS-547</scope>
    <scope>INTERACTION WITH NCOR1 AND NCOR2</scope>
</reference>
<reference key="23">
    <citation type="journal article" date="2007" name="Nat. Struct. Mol. Biol.">
        <title>A TAF4-homology domain from the corepressor ETO is a docking platform for positive and negative regulators of transcription.</title>
        <authorList>
            <person name="Wei Y."/>
            <person name="Liu S."/>
            <person name="Lausen J."/>
            <person name="Woodrell C."/>
            <person name="Cho S."/>
            <person name="Biris N."/>
            <person name="Kobayashi N."/>
            <person name="Wei Y."/>
            <person name="Yokoyama S."/>
            <person name="Werner M.H."/>
        </authorList>
    </citation>
    <scope>STRUCTURE BY NMR OF 119-225</scope>
    <scope>INTERACTION WITH NCOR1 AND TCF12</scope>
    <scope>MUTAGENESIS OF PHE-129; PHE-136; GLN-170; THR-173; PHE-175 AND LEU-177</scope>
    <scope>DOMAIN</scope>
</reference>
<reference key="24">
    <citation type="submission" date="2006-10" db="PDB data bank">
        <title>Solution structure of ZF-MYND domain of protein CBFA2TI (protein MTG8).</title>
        <authorList>
            <consortium name="RIKEN structural genomics initiative (RSGI)"/>
        </authorList>
    </citation>
    <scope>STRUCTURE BY NMR OF 505-551</scope>
</reference>
<reference key="25">
    <citation type="journal article" date="2013" name="Nature">
        <title>A stable transcription factor complex nucleated by oligomeric AML1-ETO controls leukaemogenesis.</title>
        <authorList>
            <person name="Sun X.J."/>
            <person name="Wang Z."/>
            <person name="Wang L."/>
            <person name="Jiang Y."/>
            <person name="Kost N."/>
            <person name="Soong T.D."/>
            <person name="Chen W.Y."/>
            <person name="Tang Z."/>
            <person name="Nakadai T."/>
            <person name="Elemento O."/>
            <person name="Fischle W."/>
            <person name="Melnick A."/>
            <person name="Patel D.J."/>
            <person name="Nimer S.D."/>
            <person name="Roeder R.G."/>
        </authorList>
    </citation>
    <scope>X-RAY CRYSTALLOGRAPHY (2.91 ANGSTROMS) OF 338-400 IN COMPLEX WITH TCF12</scope>
    <scope>FUNCTION</scope>
    <scope>SUBUNIT</scope>
    <scope>MUTAGENESIS OF LEU-345; 352-GLU-GLU-353; LEU-357; LEU-360; LEU-361; LEU-375; LEU-378; 379-ARG--CYS-381 AND LEU-389</scope>
</reference>
<reference key="26">
    <citation type="journal article" date="1995" name="Genes Chromosomes Cancer">
        <title>Identification of two transcripts of AML1/ETO-fused gene in t(8;21) leukemic cells and expression of wild-type ETO gene in hematopoietic cells.</title>
        <authorList>
            <person name="Era T."/>
            <person name="Asou N."/>
            <person name="Kunisada T."/>
            <person name="Yamasaki H."/>
            <person name="Asou H."/>
            <person name="Kamada N."/>
            <person name="Nishikawa S."/>
            <person name="Yamaguchi K."/>
            <person name="Takatsuki K."/>
        </authorList>
    </citation>
    <scope>CHROMOSOMAL TRANSLOCATION</scope>
    <scope>INVOLVEMENT IN AML-M2</scope>
</reference>
<reference key="27">
    <citation type="journal article" date="1993" name="Blood">
        <title>Junctions of the AML1/MTG8(ETO) fusion are constant in t(8;21) acute myeloid leukemia detected by reverse transcription polymerase chain reaction.</title>
        <authorList>
            <person name="Kozu T."/>
            <person name="Miyoshi H."/>
            <person name="Shimizu K."/>
            <person name="Maseki N."/>
            <person name="Kaneko Y."/>
            <person name="Asou H."/>
            <person name="Kamada N."/>
            <person name="Ohki M."/>
        </authorList>
    </citation>
    <scope>CHROMOSOMAL TRANSLOCATION</scope>
    <scope>INVOLVEMENT IN AML-M2</scope>
</reference>
<reference key="28">
    <citation type="journal article" date="1992" name="Cancer Genet. Cytogenet.">
        <title>Transcriptionally active chimeric gene derived from the fusion of the AML1 gene and a novel gene on chromosome 8 in t(8;21) leukemic cells.</title>
        <authorList>
            <person name="Nisson P.E."/>
            <person name="Watkins P.C."/>
            <person name="Sacchi N."/>
        </authorList>
    </citation>
    <scope>CHROMOSOMAL TRANSLOCATION</scope>
    <scope>INVOLVEMENT IN AML-M2</scope>
</reference>
<reference key="29">
    <citation type="journal article" date="2006" name="Science">
        <title>The consensus coding sequences of human breast and colorectal cancers.</title>
        <authorList>
            <person name="Sjoeblom T."/>
            <person name="Jones S."/>
            <person name="Wood L.D."/>
            <person name="Parsons D.W."/>
            <person name="Lin J."/>
            <person name="Barber T.D."/>
            <person name="Mandelker D."/>
            <person name="Leary R.J."/>
            <person name="Ptak J."/>
            <person name="Silliman N."/>
            <person name="Szabo S."/>
            <person name="Buckhaults P."/>
            <person name="Farrell C."/>
            <person name="Meeh P."/>
            <person name="Markowitz S.D."/>
            <person name="Willis J."/>
            <person name="Dawson D."/>
            <person name="Willson J.K.V."/>
            <person name="Gazdar A.F."/>
            <person name="Hartigan J."/>
            <person name="Wu L."/>
            <person name="Liu C."/>
            <person name="Parmigiani G."/>
            <person name="Park B.H."/>
            <person name="Bachman K.E."/>
            <person name="Papadopoulos N."/>
            <person name="Vogelstein B."/>
            <person name="Kinzler K.W."/>
            <person name="Velculescu V.E."/>
        </authorList>
    </citation>
    <scope>VARIANTS [LARGE SCALE ANALYSIS] TRP-386; TRP-395 AND VAL-471</scope>
</reference>
<feature type="chain" id="PRO_0000218299" description="Protein CBFA2T1">
    <location>
        <begin position="1"/>
        <end position="604"/>
    </location>
</feature>
<feature type="domain" description="TAFH" evidence="3">
    <location>
        <begin position="120"/>
        <end position="215"/>
    </location>
</feature>
<feature type="zinc finger region" description="MYND-type" evidence="2">
    <location>
        <begin position="515"/>
        <end position="551"/>
    </location>
</feature>
<feature type="region of interest" description="Disordered" evidence="4">
    <location>
        <begin position="32"/>
        <end position="114"/>
    </location>
</feature>
<feature type="region of interest" description="Disordered" evidence="4">
    <location>
        <begin position="230"/>
        <end position="298"/>
    </location>
</feature>
<feature type="region of interest" description="Important for oligomerization">
    <location>
        <begin position="337"/>
        <end position="383"/>
    </location>
</feature>
<feature type="region of interest" description="Nervy homology region 2 (NHR2)" evidence="20">
    <location>
        <begin position="337"/>
        <end position="383"/>
    </location>
</feature>
<feature type="region of interest" description="Disordered" evidence="4">
    <location>
        <begin position="401"/>
        <end position="423"/>
    </location>
</feature>
<feature type="region of interest" description="Nervy homology region 3 (NHR3)" evidence="20">
    <location>
        <begin position="443"/>
        <end position="492"/>
    </location>
</feature>
<feature type="region of interest" description="Disordered" evidence="4">
    <location>
        <begin position="557"/>
        <end position="604"/>
    </location>
</feature>
<feature type="compositionally biased region" description="Polar residues" evidence="4">
    <location>
        <begin position="63"/>
        <end position="86"/>
    </location>
</feature>
<feature type="compositionally biased region" description="Low complexity" evidence="4">
    <location>
        <begin position="95"/>
        <end position="114"/>
    </location>
</feature>
<feature type="compositionally biased region" description="Basic and acidic residues" evidence="4">
    <location>
        <begin position="238"/>
        <end position="264"/>
    </location>
</feature>
<feature type="compositionally biased region" description="Polar residues" evidence="4">
    <location>
        <begin position="271"/>
        <end position="285"/>
    </location>
</feature>
<feature type="compositionally biased region" description="Pro residues" evidence="4">
    <location>
        <begin position="289"/>
        <end position="298"/>
    </location>
</feature>
<feature type="compositionally biased region" description="Polar residues" evidence="4">
    <location>
        <begin position="557"/>
        <end position="576"/>
    </location>
</feature>
<feature type="compositionally biased region" description="Low complexity" evidence="4">
    <location>
        <begin position="587"/>
        <end position="604"/>
    </location>
</feature>
<feature type="binding site" evidence="2">
    <location>
        <position position="515"/>
    </location>
    <ligand>
        <name>Zn(2+)</name>
        <dbReference type="ChEBI" id="CHEBI:29105"/>
        <label>1</label>
    </ligand>
</feature>
<feature type="binding site" evidence="2">
    <location>
        <position position="518"/>
    </location>
    <ligand>
        <name>Zn(2+)</name>
        <dbReference type="ChEBI" id="CHEBI:29105"/>
        <label>1</label>
    </ligand>
</feature>
<feature type="binding site" evidence="2">
    <location>
        <position position="526"/>
    </location>
    <ligand>
        <name>Zn(2+)</name>
        <dbReference type="ChEBI" id="CHEBI:29105"/>
        <label>2</label>
    </ligand>
</feature>
<feature type="binding site" evidence="2">
    <location>
        <position position="529"/>
    </location>
    <ligand>
        <name>Zn(2+)</name>
        <dbReference type="ChEBI" id="CHEBI:29105"/>
        <label>2</label>
    </ligand>
</feature>
<feature type="binding site" evidence="2">
    <location>
        <position position="535"/>
    </location>
    <ligand>
        <name>Zn(2+)</name>
        <dbReference type="ChEBI" id="CHEBI:29105"/>
        <label>1</label>
    </ligand>
</feature>
<feature type="binding site" evidence="2">
    <location>
        <position position="539"/>
    </location>
    <ligand>
        <name>Zn(2+)</name>
        <dbReference type="ChEBI" id="CHEBI:29105"/>
        <label>1</label>
    </ligand>
</feature>
<feature type="binding site" evidence="2">
    <location>
        <position position="547"/>
    </location>
    <ligand>
        <name>Zn(2+)</name>
        <dbReference type="ChEBI" id="CHEBI:29105"/>
        <label>2</label>
    </ligand>
</feature>
<feature type="binding site" evidence="2">
    <location>
        <position position="551"/>
    </location>
    <ligand>
        <name>Zn(2+)</name>
        <dbReference type="ChEBI" id="CHEBI:29105"/>
        <label>2</label>
    </ligand>
</feature>
<feature type="site" description="Breakpoint for translocation to form AML1-MTG8 in AML-M2" evidence="18">
    <location>
        <begin position="30"/>
        <end position="31"/>
    </location>
</feature>
<feature type="modified residue" description="Phosphoserine" evidence="28">
    <location>
        <position position="41"/>
    </location>
</feature>
<feature type="modified residue" description="Phosphoserine" evidence="28">
    <location>
        <position position="417"/>
    </location>
</feature>
<feature type="splice variant" id="VSP_045442" description="In isoform 4." evidence="23 25">
    <location>
        <begin position="1"/>
        <end position="37"/>
    </location>
</feature>
<feature type="splice variant" id="VSP_044558" description="In isoform 3." evidence="21">
    <original>MISVKRNTWRALSLVIGDCRKKGNFEYCQ</original>
    <variation>MCHPDKAFTSDKLQCVFNEYKAAVWVPPRPRPLSRAPLPE</variation>
    <location>
        <begin position="1"/>
        <end position="29"/>
    </location>
</feature>
<feature type="splice variant" id="VSP_003327" description="In isoform MTG8A and isoform MTG8A-2." evidence="26">
    <original>MISVKRNTWRALSLVIGDCRKKGNFEYCQ</original>
    <variation>MP</variation>
    <location>
        <begin position="1"/>
        <end position="29"/>
    </location>
</feature>
<feature type="splice variant" id="VSP_058512" description="In isoform MTG8B-2 and isoform MTG8A-2." evidence="24">
    <original>D</original>
    <variation>G</variation>
    <location>
        <position position="427"/>
    </location>
</feature>
<feature type="splice variant" id="VSP_058513" description="In isoform MTG8B-2 and isoform MTG8A-2." evidence="24">
    <location>
        <begin position="428"/>
        <end position="604"/>
    </location>
</feature>
<feature type="sequence variant" id="VAR_036321" description="In a colorectal cancer sample; somatic mutation; dbSNP:rs1301792645." evidence="11">
    <original>R</original>
    <variation>W</variation>
    <location>
        <position position="386"/>
    </location>
</feature>
<feature type="sequence variant" id="VAR_036322" description="In a colorectal cancer sample; somatic mutation; dbSNP:rs1448417558." evidence="11">
    <original>R</original>
    <variation>W</variation>
    <location>
        <position position="395"/>
    </location>
</feature>
<feature type="sequence variant" id="VAR_036323" description="In a colorectal cancer sample; somatic mutation; dbSNP:rs1462140811." evidence="11">
    <original>A</original>
    <variation>V</variation>
    <location>
        <position position="471"/>
    </location>
</feature>
<feature type="mutagenesis site" description="Loss of interaction with TCF12." evidence="10">
    <original>K</original>
    <variation>A</variation>
    <variation>D</variation>
    <location>
        <position position="125"/>
    </location>
</feature>
<feature type="mutagenesis site" description="Loss of interaction with TCF12." evidence="10">
    <original>L</original>
    <variation>A</variation>
    <location>
        <position position="126"/>
    </location>
</feature>
<feature type="mutagenesis site" description="Loss of interaction with TCF12." evidence="10">
    <original>R</original>
    <variation>D</variation>
    <location>
        <position position="128"/>
    </location>
</feature>
<feature type="mutagenesis site" description="Loss of interaction with TCF12." evidence="10 13">
    <original>F</original>
    <variation>A</variation>
    <location>
        <position position="129"/>
    </location>
</feature>
<feature type="mutagenesis site" description="Abolishes interaction with corepressor." evidence="10 13">
    <original>F</original>
    <variation>K</variation>
    <location>
        <position position="129"/>
    </location>
</feature>
<feature type="mutagenesis site" description="Abolishes interaction with corepressor." evidence="13">
    <original>F</original>
    <variation>A</variation>
    <location>
        <position position="136"/>
    </location>
</feature>
<feature type="mutagenesis site" description="Abolishes interaction with corepressor." evidence="13">
    <original>Q</original>
    <variation>A</variation>
    <location>
        <position position="170"/>
    </location>
</feature>
<feature type="mutagenesis site" description="Abolishes interaction with corepressor." evidence="13">
    <original>T</original>
    <variation>Q</variation>
    <location>
        <position position="173"/>
    </location>
</feature>
<feature type="mutagenesis site" description="Abolishes interaction with corepressor." evidence="13">
    <original>F</original>
    <variation>A</variation>
    <location>
        <position position="175"/>
    </location>
</feature>
<feature type="mutagenesis site" description="Abolishes interaction with corepressor." evidence="13">
    <original>L</original>
    <variation>A</variation>
    <location>
        <position position="177"/>
    </location>
</feature>
<feature type="mutagenesis site" description="Loss of interaction with TCF12." evidence="10">
    <original>R</original>
    <variation>A</variation>
    <variation>D</variation>
    <location>
        <position position="178"/>
    </location>
</feature>
<feature type="mutagenesis site" description="Loss of interaction with TCF12." evidence="10">
    <original>F</original>
    <variation>A</variation>
    <location>
        <position position="184"/>
    </location>
</feature>
<feature type="mutagenesis site" description="Disrupts tetramerization, disrupts AML1-MTG8/ETO interaction with TCF12, decreases AML1-MTG8/ETO interaction with RUNX1T1, CBFA2T3 and CBFA2T2; when associated with R-357; R-360; E-361; E-375; R-378 and R-389." evidence="9 16">
    <original>L</original>
    <variation>E</variation>
    <location>
        <position position="345"/>
    </location>
</feature>
<feature type="mutagenesis site" description="Decreases interaction with TCF12, no effect on oligomerization. Impairs AML1-MTG8/ETO activity in hematopoietic stem/progenitor cell self-renewal but no effect in inhibiting differentiation; when associated with 379-A--A-381." evidence="16">
    <original>EE</original>
    <variation>AA</variation>
    <location>
        <begin position="352"/>
        <end position="353"/>
    </location>
</feature>
<feature type="mutagenesis site" description="Disrupts tetramerization, disrupts AML1-MTG8/ETO interaction with TCF12, decreases AML1-MTG8/ETO interaction with RUNX1T1, CBFA2T3 and CBFA2T2; when associated with E-345; R-360; E- 61; E-375; R-378 and R-389." evidence="9 16">
    <original>L</original>
    <variation>R</variation>
    <location>
        <position position="357"/>
    </location>
</feature>
<feature type="mutagenesis site" description="Disrupts tetramerization, disrupts AML1-MTG8/ETO interaction with TCF12, decreases AML1-MTG8/ETO interaction with RUNX1T1, CBFA2T3 and CBFA2T2; when associated with E-345; R-357; E-361; E-375; R-378 and R-389." evidence="9 16">
    <original>L</original>
    <variation>R</variation>
    <location>
        <position position="360"/>
    </location>
</feature>
<feature type="mutagenesis site" description="Disrupts tetramerization, disrupts AML1-MTG8/ETO interaction with TCF12, decreases AML1-MTG8/ETO interaction with RUNX1T1, CBFA2T3 and CBFA2T2; when associated with E-345; R-357; R-360; E-375; R-378 and R-389." evidence="9 16">
    <original>L</original>
    <variation>E</variation>
    <location>
        <position position="361"/>
    </location>
</feature>
<feature type="mutagenesis site" description="Disrupts tetramerization, disrupts AML1-MTG8/ETO interaction with TCF12, decreases AML1-MTG8/ETO interaction with RUNX1T1, CBFA2T3 and CBFA2T2; when associated with E-345; R-357; R-360; E-361; R-378 and R-389." evidence="9 16">
    <original>L</original>
    <variation>E</variation>
    <location>
        <position position="375"/>
    </location>
</feature>
<feature type="mutagenesis site" description="Disrupts tetramerization, disrupts AML1-MTG8/ETO interaction with TCF12, decreases AML1-MTG8/ETO interaction with RUNX1T1, CBFA2T3 and CBFA2T2 when associated with E-345; R-357; R-360; E-361; E-375 and R-389." evidence="9 16">
    <original>L</original>
    <variation>R</variation>
    <location>
        <position position="378"/>
    </location>
</feature>
<feature type="mutagenesis site" description="Disrupts interaction with TCF12, no effect on oligomerization. Impairs AML1-MTG8/ETO activity in hematopoietic stem/progenitor cell self-renewal but no effect in inhibiting differentiation; when associated with 352-E-E-353." evidence="16">
    <original>RRC</original>
    <variation>AAA</variation>
    <location>
        <begin position="379"/>
        <end position="381"/>
    </location>
</feature>
<feature type="mutagenesis site" description="Disrupts tetramerization, disrupts AML1-MTG8/ETO interaction with TCF12, decreases AML1-MTG8/ETO interaction with RUNX1T1, CBFA2T3 and CBFA2T2; when associated with E-345; R-357; R-360; E-361; E-375 and R-378." evidence="9 16">
    <original>L</original>
    <variation>R</variation>
    <location>
        <position position="389"/>
    </location>
</feature>
<feature type="mutagenesis site" description="Causes unfolding of the MYND-type zinc finger domain." evidence="12">
    <original>H</original>
    <variation>A</variation>
    <location>
        <position position="547"/>
    </location>
</feature>
<feature type="sequence conflict" description="In Ref. 3; BAH12630." evidence="27" ref="3">
    <original>E</original>
    <variation>G</variation>
    <location>
        <position position="455"/>
    </location>
</feature>
<feature type="sequence conflict" description="In Ref. 3; BAH12630." evidence="27" ref="3">
    <original>N</original>
    <variation>S</variation>
    <location>
        <position position="506"/>
    </location>
</feature>
<feature type="helix" evidence="31">
    <location>
        <begin position="121"/>
        <end position="123"/>
    </location>
</feature>
<feature type="helix" evidence="31">
    <location>
        <begin position="125"/>
        <end position="135"/>
    </location>
</feature>
<feature type="helix" evidence="31">
    <location>
        <begin position="137"/>
        <end position="140"/>
    </location>
</feature>
<feature type="helix" evidence="31">
    <location>
        <begin position="142"/>
        <end position="156"/>
    </location>
</feature>
<feature type="helix" evidence="31">
    <location>
        <begin position="162"/>
        <end position="172"/>
    </location>
</feature>
<feature type="strand" evidence="31">
    <location>
        <begin position="173"/>
        <end position="176"/>
    </location>
</feature>
<feature type="strand" evidence="31">
    <location>
        <begin position="179"/>
        <end position="181"/>
    </location>
</feature>
<feature type="helix" evidence="31">
    <location>
        <begin position="182"/>
        <end position="186"/>
    </location>
</feature>
<feature type="helix" evidence="31">
    <location>
        <begin position="189"/>
        <end position="199"/>
    </location>
</feature>
<feature type="helix" evidence="31">
    <location>
        <begin position="200"/>
        <end position="202"/>
    </location>
</feature>
<feature type="helix" evidence="31">
    <location>
        <begin position="209"/>
        <end position="212"/>
    </location>
</feature>
<feature type="helix" evidence="29">
    <location>
        <begin position="347"/>
        <end position="399"/>
    </location>
</feature>
<feature type="helix" evidence="32">
    <location>
        <begin position="444"/>
        <end position="465"/>
    </location>
</feature>
<feature type="strand" evidence="33">
    <location>
        <begin position="512"/>
        <end position="514"/>
    </location>
</feature>
<feature type="strand" evidence="30">
    <location>
        <begin position="516"/>
        <end position="518"/>
    </location>
</feature>
<feature type="strand" evidence="33">
    <location>
        <begin position="524"/>
        <end position="526"/>
    </location>
</feature>
<feature type="turn" evidence="30">
    <location>
        <begin position="527"/>
        <end position="529"/>
    </location>
</feature>
<feature type="strand" evidence="30">
    <location>
        <begin position="533"/>
        <end position="536"/>
    </location>
</feature>
<feature type="helix" evidence="30">
    <location>
        <begin position="537"/>
        <end position="542"/>
    </location>
</feature>
<feature type="helix" evidence="30">
    <location>
        <begin position="544"/>
        <end position="547"/>
    </location>
</feature>
<feature type="turn" evidence="30">
    <location>
        <begin position="548"/>
        <end position="550"/>
    </location>
</feature>
<gene>
    <name type="primary">RUNX1T1</name>
    <name type="synonym">AML1T1</name>
    <name type="synonym">CBFA2T1</name>
    <name type="synonym">CDR</name>
    <name type="synonym">ETO</name>
    <name type="synonym">MTG8</name>
    <name type="synonym">ZMYND2</name>
</gene>